<proteinExistence type="evidence at protein level"/>
<evidence type="ECO:0000250" key="1"/>
<evidence type="ECO:0000250" key="2">
    <source>
        <dbReference type="UniProtKB" id="P49615"/>
    </source>
</evidence>
<evidence type="ECO:0000250" key="3">
    <source>
        <dbReference type="UniProtKB" id="Q02399"/>
    </source>
</evidence>
<evidence type="ECO:0000250" key="4">
    <source>
        <dbReference type="UniProtKB" id="Q03114"/>
    </source>
</evidence>
<evidence type="ECO:0000255" key="5">
    <source>
        <dbReference type="PROSITE-ProRule" id="PRU00159"/>
    </source>
</evidence>
<evidence type="ECO:0000255" key="6">
    <source>
        <dbReference type="PROSITE-ProRule" id="PRU10027"/>
    </source>
</evidence>
<evidence type="ECO:0000269" key="7">
    <source>
    </source>
</evidence>
<evidence type="ECO:0000269" key="8">
    <source>
    </source>
</evidence>
<evidence type="ECO:0000269" key="9">
    <source>
    </source>
</evidence>
<evidence type="ECO:0000269" key="10">
    <source>
    </source>
</evidence>
<evidence type="ECO:0000269" key="11">
    <source>
    </source>
</evidence>
<evidence type="ECO:0000269" key="12">
    <source>
    </source>
</evidence>
<evidence type="ECO:0000269" key="13">
    <source>
    </source>
</evidence>
<evidence type="ECO:0000269" key="14">
    <source>
    </source>
</evidence>
<evidence type="ECO:0000269" key="15">
    <source>
    </source>
</evidence>
<evidence type="ECO:0000269" key="16">
    <source>
    </source>
</evidence>
<evidence type="ECO:0000269" key="17">
    <source>
    </source>
</evidence>
<evidence type="ECO:0000269" key="18">
    <source>
    </source>
</evidence>
<evidence type="ECO:0000269" key="19">
    <source>
    </source>
</evidence>
<evidence type="ECO:0000269" key="20">
    <source>
    </source>
</evidence>
<evidence type="ECO:0000269" key="21">
    <source>
    </source>
</evidence>
<evidence type="ECO:0000269" key="22">
    <source>
    </source>
</evidence>
<evidence type="ECO:0000269" key="23">
    <source>
    </source>
</evidence>
<evidence type="ECO:0000269" key="24">
    <source>
    </source>
</evidence>
<evidence type="ECO:0000269" key="25">
    <source>
    </source>
</evidence>
<evidence type="ECO:0000269" key="26">
    <source>
    </source>
</evidence>
<evidence type="ECO:0000269" key="27">
    <source>
    </source>
</evidence>
<evidence type="ECO:0000269" key="28">
    <source>
    </source>
</evidence>
<evidence type="ECO:0000269" key="29">
    <source>
    </source>
</evidence>
<evidence type="ECO:0000269" key="30">
    <source>
    </source>
</evidence>
<evidence type="ECO:0000269" key="31">
    <source>
    </source>
</evidence>
<evidence type="ECO:0000269" key="32">
    <source>
    </source>
</evidence>
<evidence type="ECO:0000269" key="33">
    <source>
    </source>
</evidence>
<evidence type="ECO:0000269" key="34">
    <source>
    </source>
</evidence>
<evidence type="ECO:0000269" key="35">
    <source>
    </source>
</evidence>
<evidence type="ECO:0000269" key="36">
    <source>
    </source>
</evidence>
<evidence type="ECO:0000303" key="37">
    <source>
    </source>
</evidence>
<evidence type="ECO:0000305" key="38"/>
<evidence type="ECO:0000312" key="39">
    <source>
        <dbReference type="HGNC" id="HGNC:1774"/>
    </source>
</evidence>
<evidence type="ECO:0007744" key="40">
    <source>
    </source>
</evidence>
<evidence type="ECO:0007744" key="41">
    <source>
    </source>
</evidence>
<evidence type="ECO:0007744" key="42">
    <source>
    </source>
</evidence>
<evidence type="ECO:0007744" key="43">
    <source>
    </source>
</evidence>
<evidence type="ECO:0007829" key="44">
    <source>
        <dbReference type="PDB" id="1UNG"/>
    </source>
</evidence>
<evidence type="ECO:0007829" key="45">
    <source>
        <dbReference type="PDB" id="4AU8"/>
    </source>
</evidence>
<evidence type="ECO:0007829" key="46">
    <source>
        <dbReference type="PDB" id="7VDQ"/>
    </source>
</evidence>
<comment type="function">
    <text evidence="4 9 10 13 14 15 18 19 20 21 22 23 24 25 26 27 28 29 30 31 33 36">Proline-directed serine/threonine-protein kinase essential for neuronal cell cycle arrest and differentiation and may be involved in apoptotic cell death in neuronal diseases by triggering abortive cell cycle re-entry. Interacts with D1 and D3-type G1 cyclins. Phosphorylates SRC, NOS3, VIM/vimentin, p35/CDK5R1, MEF2A, SIPA1L1, SH3GLB1, PXN, PAK1, MCAM/MUC18, SEPT5, SYN1, DNM1, AMPH, SYNJ1, CDK16, RAC1, RHOA, CDC42, TONEBP/NFAT5, MAPT/TAU, MAP1B, histone H1, p53/TP53, HDAC1, APEX1, PTK2/FAK1, huntingtin/HTT, ATM, MAP2, NEFH and NEFM. Regulates several neuronal development and physiological processes including neuronal survival, migration and differentiation, axonal and neurite growth, synaptogenesis, oligodendrocyte differentiation, synaptic plasticity and neurotransmission, by phosphorylating key proteins. Negatively regulates the CACNA1B/CAV2.2 -mediated Ca(2+) release probability at hippocampal neuronal soma and synaptic terminals (By similarity). Activated by interaction with CDK5R1 (p35) and CDK5R2 (p39), especially in postmitotic neurons, and promotes CDK5R1 (p35) expression in an autostimulation loop. Phosphorylates many downstream substrates such as Rho and Ras family small GTPases (e.g. PAK1, RAC1, RHOA, CDC42) or microtubule-binding proteins (e.g. MAPT/TAU, MAP2, MAP1B), and modulates actin dynamics to regulate neurite growth and/or spine morphogenesis. Also phosphorylates exocytosis associated proteins such as MCAM/MUC18, SEPT5, SYN1, and CDK16/PCTAIRE1 as well as endocytosis associated proteins such as DNM1, AMPH and SYNJ1 at synaptic terminals. In the mature central nervous system (CNS), regulates neurotransmitter movements by phosphorylating substrates associated with neurotransmitter release and synapse plasticity; synaptic vesicle exocytosis, vesicles fusion with the presynaptic membrane, and endocytosis. Promotes cell survival by activating anti-apoptotic proteins BCL2 and STAT3, and negatively regulating of JNK3/MAPK10 activity. Phosphorylation of p53/TP53 in response to genotoxic and oxidative stresses enhances its stabilization by preventing ubiquitin ligase-mediated proteasomal degradation, and induces transactivation of p53/TP53 target genes, thus regulating apoptosis. Phosphorylation of p35/CDK5R1 enhances its stabilization by preventing calpain-mediated proteolysis producing p25/CDK5R1 and avoiding ubiquitin ligase-mediated proteasomal degradation. During aberrant cell-cycle activity and DNA damage, p25/CDK5 activity elicits cell-cycle activity and double-strand DNA breaks that precedes neuronal death by deregulating HDAC1. DNA damage triggered phosphorylation of huntingtin/HTT in nuclei of neurons protects neurons against polyglutamine expansion as well as DNA damage mediated toxicity. Phosphorylation of PXN reduces its interaction with PTK2/FAK1 in matrix-cell focal adhesions (MCFA) during oligodendrocytes (OLs) differentiation. Negative regulator of Wnt/beta-catenin signaling pathway. Activator of the GAIT (IFN-gamma-activated inhibitor of translation) pathway, which suppresses expression of a post-transcriptional regulon of proinflammatory genes in myeloid cells; phosphorylates the linker domain of glutamyl-prolyl tRNA synthetase (EPRS) in a IFN-gamma-dependent manner, the initial event in assembly of the GAIT complex. Phosphorylation of SH3GLB1 is required for autophagy induction in starved neurons. Phosphorylation of TONEBP/NFAT5 in response to osmotic stress mediates its rapid nuclear localization. MEF2 is inactivated by phosphorylation in nucleus in response to neurotoxin, thus leading to neuronal apoptosis. APEX1 AP-endodeoxyribonuclease is repressed by phosphorylation, resulting in accumulation of DNA damage and contributing to neuronal death. NOS3 phosphorylation down regulates NOS3-derived nitrite (NO) levels. SRC phosphorylation mediates its ubiquitin-dependent degradation and thus leads to cytoskeletal reorganization. May regulate endothelial cell migration and angiogenesis via the modulation of lamellipodia formation. Involved in dendritic spine morphogenesis by mediating the EFNA1-EPHA4 signaling. The complex p35/CDK5 participates in the regulation of the circadian clock by modulating the function of CLOCK protein: phosphorylates CLOCK at 'Thr-451' and 'Thr-461' and regulates the transcriptional activity of the CLOCK-BMAL1 heterodimer in association with altered stability and subcellular distribution.</text>
</comment>
<comment type="catalytic activity">
    <reaction>
        <text>L-seryl-[protein] + ATP = O-phospho-L-seryl-[protein] + ADP + H(+)</text>
        <dbReference type="Rhea" id="RHEA:17989"/>
        <dbReference type="Rhea" id="RHEA-COMP:9863"/>
        <dbReference type="Rhea" id="RHEA-COMP:11604"/>
        <dbReference type="ChEBI" id="CHEBI:15378"/>
        <dbReference type="ChEBI" id="CHEBI:29999"/>
        <dbReference type="ChEBI" id="CHEBI:30616"/>
        <dbReference type="ChEBI" id="CHEBI:83421"/>
        <dbReference type="ChEBI" id="CHEBI:456216"/>
        <dbReference type="EC" id="2.7.11.1"/>
    </reaction>
</comment>
<comment type="catalytic activity">
    <reaction>
        <text>L-threonyl-[protein] + ATP = O-phospho-L-threonyl-[protein] + ADP + H(+)</text>
        <dbReference type="Rhea" id="RHEA:46608"/>
        <dbReference type="Rhea" id="RHEA-COMP:11060"/>
        <dbReference type="Rhea" id="RHEA-COMP:11605"/>
        <dbReference type="ChEBI" id="CHEBI:15378"/>
        <dbReference type="ChEBI" id="CHEBI:30013"/>
        <dbReference type="ChEBI" id="CHEBI:30616"/>
        <dbReference type="ChEBI" id="CHEBI:61977"/>
        <dbReference type="ChEBI" id="CHEBI:456216"/>
        <dbReference type="EC" id="2.7.11.1"/>
    </reaction>
</comment>
<comment type="activity regulation">
    <text evidence="10 13 19 32 35">Inhibited by 2-(1-ethyl-2-hydroxyethylamino)-6-benzylamino-9-isopropylpurine (roscovitine), 1-isopropyl-4-aminobenzyl-6-ether-linked benzimidazoles, resveratrol, AT-7519 and olomoucine. Activated by CDK5R1 (p35) and CDK5R2 (p39) during the development of the nervous system; degradation of CDK5R1 (p35) and CDK5R2 (p39) by proteasome result in down regulation of kinase activity, during this process, CDK5 phosphorylates p35 and induces its ubiquitination and subsequent degradation. Kinase activity is mainly determined by the amount of p35 available and subcellular location; reversible association to plasma membrane inhibits activity. Long-term inactivation as well as CDK5R1 (p25)-mediated hyperactivation of CDK5 triggers cell death. The pro-death activity of hyperactivated CDK5 is suppressed by membrane association of CDK5, via myristoylation of p35. Brain-derived neurotrophic factor, glial-derived neurotrophic factor, nerve growth factor (NGF), retinoic acid, laminin and neuregulin promote activity. Neurotoxicity enhances nuclear activity, thus leading to MEF2 phosphorylation and inhibition prior to apoptosis of cortical neurons. Repression by GSTP1 via p25/p35 translocation prevents neurodegeneration.</text>
</comment>
<comment type="subunit">
    <text evidence="1 2 8 11 12 14 18 20 23 32 33">Heterodimer composed of a catalytic subunit CDK5 and a regulatory subunit CDK5R1 (p25) and macromolecular complex composed of at least CDK5, CDK5R1 (p35) and CDK5RAP1 or CDK5RAP2 or CDK5RAP3. Only the heterodimer shows kinase activity. Under neurotoxic stress and neuronal injury conditions, p35 is cleaved by calpain to generate p25 that hyperactivates CDK5, that becomes functionally disabled and often toxic. Found in a trimolecular complex with CABLES1 and ABL1. Interacts with CABLES1 and CABLES2 (By similarity). Interacts with AATK and GSTP1. Binds to HDAC1 when in complex with p25. Interaction with myristoylation p35 promotes CDK5 association with membranes. Both isoforms 1 and 2 interacts with beta-catenin/CTNNB1. Interacts with delta-catenin/CTNND2 and APEX1. Interacts with P53/TP53 in neurons. Interacts with EPHA4; may mediate the activation of NGEF by EPHA4. Interacts with PTK2/FAK1 (By similarity). The complex p35/CDK5 interacts with CLOCK. Interacts with HTR6 (By similarity).</text>
</comment>
<comment type="interaction">
    <interactant intactId="EBI-1041567">
        <id>Q00535</id>
    </interactant>
    <interactant intactId="EBI-351428">
        <id>P61158</id>
        <label>ACTR3</label>
    </interactant>
    <organismsDiffer>false</organismsDiffer>
    <experiments>3</experiments>
</comment>
<comment type="interaction">
    <interactant intactId="EBI-1041567">
        <id>Q00535</id>
    </interactant>
    <interactant intactId="EBI-77613">
        <id>P05067</id>
        <label>APP</label>
    </interactant>
    <organismsDiffer>false</organismsDiffer>
    <experiments>3</experiments>
</comment>
<comment type="interaction">
    <interactant intactId="EBI-1041567">
        <id>Q00535</id>
    </interactant>
    <interactant intactId="EBI-12275524">
        <id>P23560-2</id>
        <label>BDNF</label>
    </interactant>
    <organismsDiffer>false</organismsDiffer>
    <experiments>3</experiments>
</comment>
<comment type="interaction">
    <interactant intactId="EBI-1041567">
        <id>Q00535</id>
    </interactant>
    <interactant intactId="EBI-604615">
        <id>Q8TDN4</id>
        <label>CABLES1</label>
    </interactant>
    <organismsDiffer>false</organismsDiffer>
    <experiments>8</experiments>
</comment>
<comment type="interaction">
    <interactant intactId="EBI-1041567">
        <id>Q00535</id>
    </interactant>
    <interactant intactId="EBI-495332">
        <id>P14635</id>
        <label>CCNB1</label>
    </interactant>
    <organismsDiffer>false</organismsDiffer>
    <experiments>8</experiments>
</comment>
<comment type="interaction">
    <interactant intactId="EBI-1041567">
        <id>Q00535</id>
    </interactant>
    <interactant intactId="EBI-395261">
        <id>P24863</id>
        <label>CCNC</label>
    </interactant>
    <organismsDiffer>false</organismsDiffer>
    <experiments>2</experiments>
</comment>
<comment type="interaction">
    <interactant intactId="EBI-1041567">
        <id>Q00535</id>
    </interactant>
    <interactant intactId="EBI-748789">
        <id>P30279</id>
        <label>CCND2</label>
    </interactant>
    <organismsDiffer>false</organismsDiffer>
    <experiments>18</experiments>
</comment>
<comment type="interaction">
    <interactant intactId="EBI-1041567">
        <id>Q00535</id>
    </interactant>
    <interactant intactId="EBI-375013">
        <id>P30281</id>
        <label>CCND3</label>
    </interactant>
    <organismsDiffer>false</organismsDiffer>
    <experiments>12</experiments>
</comment>
<comment type="interaction">
    <interactant intactId="EBI-1041567">
        <id>Q00535</id>
    </interactant>
    <interactant intactId="EBI-1104653">
        <id>Q14094</id>
        <label>CCNI</label>
    </interactant>
    <organismsDiffer>false</organismsDiffer>
    <experiments>6</experiments>
</comment>
<comment type="interaction">
    <interactant intactId="EBI-1041567">
        <id>Q00535</id>
    </interactant>
    <interactant intactId="EBI-746189">
        <id>Q15078</id>
        <label>CDK5R1</label>
    </interactant>
    <organismsDiffer>false</organismsDiffer>
    <experiments>15</experiments>
</comment>
<comment type="interaction">
    <interactant intactId="EBI-1041567">
        <id>Q00535</id>
    </interactant>
    <interactant intactId="EBI-375077">
        <id>P38936</id>
        <label>CDKN1A</label>
    </interactant>
    <organismsDiffer>false</organismsDiffer>
    <experiments>7</experiments>
</comment>
<comment type="interaction">
    <interactant intactId="EBI-1041567">
        <id>Q00535</id>
    </interactant>
    <interactant intactId="EBI-519280">
        <id>P46527</id>
        <label>CDKN1B</label>
    </interactant>
    <organismsDiffer>false</organismsDiffer>
    <experiments>14</experiments>
</comment>
<comment type="interaction">
    <interactant intactId="EBI-1041567">
        <id>Q00535</id>
    </interactant>
    <interactant intactId="EBI-746704">
        <id>Q9UJC3</id>
        <label>HOOK1</label>
    </interactant>
    <organismsDiffer>false</organismsDiffer>
    <experiments>3</experiments>
</comment>
<comment type="interaction">
    <interactant intactId="EBI-1041567">
        <id>Q00535</id>
    </interactant>
    <interactant intactId="EBI-16439278">
        <id>Q6FHY5</id>
        <label>MEOX2</label>
    </interactant>
    <organismsDiffer>false</organismsDiffer>
    <experiments>3</experiments>
</comment>
<comment type="interaction">
    <interactant intactId="EBI-1041567">
        <id>Q00535</id>
    </interactant>
    <interactant intactId="EBI-945925">
        <id>Q9Y6R0</id>
        <label>NUMBL</label>
    </interactant>
    <organismsDiffer>false</organismsDiffer>
    <experiments>3</experiments>
</comment>
<comment type="interaction">
    <interactant intactId="EBI-1041567">
        <id>Q00535</id>
    </interactant>
    <interactant intactId="EBI-781416">
        <id>P37231-2</id>
        <label>PPARG</label>
    </interactant>
    <organismsDiffer>false</organismsDiffer>
    <experiments>2</experiments>
</comment>
<comment type="interaction">
    <interactant intactId="EBI-1041567">
        <id>Q00535</id>
    </interactant>
    <interactant intactId="EBI-437708">
        <id>P62937</id>
        <label>PPIA</label>
    </interactant>
    <organismsDiffer>false</organismsDiffer>
    <experiments>3</experiments>
</comment>
<comment type="interaction">
    <interactant intactId="EBI-1041567">
        <id>Q00535</id>
    </interactant>
    <interactant intactId="EBI-21251460">
        <id>O60260-5</id>
        <label>PRKN</label>
    </interactant>
    <organismsDiffer>false</organismsDiffer>
    <experiments>3</experiments>
</comment>
<comment type="interaction">
    <interactant intactId="EBI-1041567">
        <id>Q00535</id>
    </interactant>
    <interactant intactId="EBI-7125479">
        <id>Q5MJ70</id>
        <label>SPDYA</label>
    </interactant>
    <organismsDiffer>false</organismsDiffer>
    <experiments>3</experiments>
</comment>
<comment type="interaction">
    <interactant intactId="EBI-1041567">
        <id>Q00535</id>
    </interactant>
    <interactant intactId="EBI-12047907">
        <id>A6NLX3</id>
        <label>SPDYE4</label>
    </interactant>
    <organismsDiffer>false</organismsDiffer>
    <experiments>4</experiments>
</comment>
<comment type="interaction">
    <interactant intactId="EBI-1041567">
        <id>Q00535</id>
    </interactant>
    <interactant intactId="EBI-355371">
        <id>P20226</id>
        <label>TBP</label>
    </interactant>
    <organismsDiffer>false</organismsDiffer>
    <experiments>3</experiments>
</comment>
<comment type="interaction">
    <interactant intactId="EBI-1041567">
        <id>Q00535</id>
    </interactant>
    <interactant intactId="EBI-714860">
        <id>P09936</id>
        <label>UCHL1</label>
    </interactant>
    <organismsDiffer>false</organismsDiffer>
    <experiments>2</experiments>
</comment>
<comment type="subcellular location">
    <molecule>Isoform 1</molecule>
    <subcellularLocation>
        <location evidence="10">Cytoplasm</location>
    </subcellularLocation>
    <subcellularLocation>
        <location evidence="10">Nucleus</location>
    </subcellularLocation>
    <subcellularLocation>
        <location evidence="14">Cell membrane</location>
        <topology>Peripheral membrane protein</topology>
    </subcellularLocation>
    <subcellularLocation>
        <location>Perikaryon</location>
    </subcellularLocation>
    <subcellularLocation>
        <location evidence="2">Cell projection</location>
        <location evidence="2">Lamellipodium</location>
    </subcellularLocation>
    <subcellularLocation>
        <location evidence="2">Cell projection</location>
        <location evidence="2">Growth cone</location>
    </subcellularLocation>
    <subcellularLocation>
        <location evidence="4">Postsynaptic density</location>
    </subcellularLocation>
    <subcellularLocation>
        <location evidence="4">Synapse</location>
    </subcellularLocation>
    <text evidence="1">In axonal growth cone with extension to the peripheral lamellipodia (By similarity). Under neurotoxic stress and neuronal injury conditions, CDK5R (p35) is cleaved by calpain to generate CDK5R1 (p25) in response to increased intracellular calcium. The elevated level of p25, when in complex with CDK5, leads to its subcellular misallocation as well as its hyperactivation. Colocalizes with CTNND2 in the cell body of neuronal cells, and with CTNNB1 in the cell-cell contacts and plasma membrane of undifferentiated and differentiated neuroblastoma cells. Reversibly attached to the plasma membrane in an inactive form when complexed to dephosphorylated p35 or CDK5R2 (p39), p35 phosphorylation releases this attachment and activates CDK5.</text>
</comment>
<comment type="subcellular location">
    <molecule>Isoform 2</molecule>
    <subcellularLocation>
        <location>Nucleus</location>
    </subcellularLocation>
</comment>
<comment type="alternative products">
    <event type="alternative splicing"/>
    <isoform>
        <id>Q00535-1</id>
        <name>1</name>
        <sequence type="displayed"/>
    </isoform>
    <isoform>
        <id>Q00535-2</id>
        <name>2</name>
        <name evidence="37">CDK5-SV</name>
        <sequence type="described" ref="VSP_041948"/>
    </isoform>
</comment>
<comment type="tissue specificity">
    <molecule>Isoform 1</molecule>
    <text evidence="14 23">Ubiquitously expressed (PubMed:17009320, PubMed:19693690). Accumulates in cortical neurons (at protein level) (PubMed:17009320).</text>
</comment>
<comment type="tissue specificity">
    <molecule>Isoform 2</molecule>
    <text evidence="23">Expressed in the testis, skeletal muscle, colon, bone marrow and ovary.</text>
</comment>
<comment type="PTM">
    <text evidence="7 12 16">Phosphorylation on Tyr-15 by ABL1 and FYN, and on Ser-159 by casein kinase 1 promotes kinase activity. By contrast, phosphorylation at Thr-14 inhibits activity.</text>
</comment>
<comment type="PTM">
    <text evidence="7">Phosphorylation at Ser-159 is essential for maximal catalytic activity.</text>
</comment>
<comment type="disease" evidence="34">
    <disease id="DI-04422">
        <name>Lissencephaly 7, with cerebellar hypoplasia</name>
        <acronym>LIS7</acronym>
        <description>A form of lissencephaly, a disorder of cortical development characterized by agyria or pachygyria and disorganization of the clear neuronal lamination of normal six-layered cortex. LIS7 patients manifest lack of psychomotor development, facial dysmorphism, arthrogryposis, and early-onset intractable seizures resulting in death in infancy.</description>
        <dbReference type="MIM" id="616342"/>
    </disease>
    <text>The disease is caused by variants affecting the gene represented in this entry.</text>
</comment>
<comment type="miscellaneous">
    <text>Dysregulation of CDK5 is associated with neurodegenerative disorders such as Alzheimer, Parkinson, and Niemann-Pick type C diseases, ischemia, and amyotrophic lateral sclerosis.</text>
</comment>
<comment type="similarity">
    <text evidence="38">Belongs to the protein kinase superfamily. CMGC Ser/Thr protein kinase family. CDC2/CDKX subfamily.</text>
</comment>
<gene>
    <name evidence="39" type="primary">CDK5</name>
    <name evidence="39" type="synonym">CDKN5</name>
    <name evidence="2" type="synonym">PSSALRE</name>
</gene>
<protein>
    <recommendedName>
        <fullName evidence="39">Cyclin-dependent kinase 5</fullName>
        <ecNumber>2.7.11.1</ecNumber>
    </recommendedName>
    <alternativeName>
        <fullName evidence="38">Cell division protein kinase 5</fullName>
    </alternativeName>
    <alternativeName>
        <fullName>Cyclin-dependent-like kinase 5</fullName>
    </alternativeName>
    <alternativeName>
        <fullName evidence="4">Serine/threonine-protein kinase PSSALRE</fullName>
    </alternativeName>
    <alternativeName>
        <fullName evidence="3">Tau protein kinase II catalytic subunit</fullName>
        <shortName evidence="3">TPKII catalytic subunit</shortName>
    </alternativeName>
</protein>
<feature type="chain" id="PRO_0000085784" description="Cyclin-dependent kinase 5">
    <location>
        <begin position="1"/>
        <end position="292"/>
    </location>
</feature>
<feature type="domain" description="Protein kinase" evidence="5">
    <location>
        <begin position="4"/>
        <end position="286"/>
    </location>
</feature>
<feature type="active site" description="Proton acceptor" evidence="5 6">
    <location>
        <position position="126"/>
    </location>
</feature>
<feature type="binding site" evidence="5">
    <location>
        <begin position="10"/>
        <end position="18"/>
    </location>
    <ligand>
        <name>ATP</name>
        <dbReference type="ChEBI" id="CHEBI:30616"/>
    </ligand>
</feature>
<feature type="binding site" evidence="5">
    <location>
        <position position="33"/>
    </location>
    <ligand>
        <name>ATP</name>
        <dbReference type="ChEBI" id="CHEBI:30616"/>
    </ligand>
</feature>
<feature type="modified residue" description="Phosphotyrosine; by ABL1, EPHA4 and FYN" evidence="12 16">
    <location>
        <position position="15"/>
    </location>
</feature>
<feature type="modified residue" description="Phosphothreonine" evidence="43">
    <location>
        <position position="17"/>
    </location>
</feature>
<feature type="modified residue" description="N6-acetyllysine" evidence="42">
    <location>
        <position position="56"/>
    </location>
</feature>
<feature type="modified residue" description="Phosphoserine" evidence="40 41">
    <location>
        <position position="72"/>
    </location>
</feature>
<feature type="modified residue" description="Phosphoserine" evidence="7">
    <location>
        <position position="159"/>
    </location>
</feature>
<feature type="splice variant" id="VSP_041948" description="In isoform 2." evidence="37">
    <location>
        <begin position="105"/>
        <end position="136"/>
    </location>
</feature>
<feature type="sequence variant" id="VAR_041977" description="In dbSNP:rs35186917." evidence="17">
    <original>E</original>
    <variation>D</variation>
    <location>
        <position position="225"/>
    </location>
</feature>
<feature type="mutagenesis site" description="No phenotype." evidence="8">
    <original>S</original>
    <variation>A</variation>
    <location>
        <position position="159"/>
    </location>
</feature>
<feature type="mutagenesis site" description="Impaired p35/p25 (CDK5R1) binding." evidence="8">
    <original>S</original>
    <variation>T</variation>
    <location>
        <position position="159"/>
    </location>
</feature>
<feature type="strand" evidence="45">
    <location>
        <begin position="4"/>
        <end position="12"/>
    </location>
</feature>
<feature type="strand" evidence="45">
    <location>
        <begin position="14"/>
        <end position="23"/>
    </location>
</feature>
<feature type="turn" evidence="45">
    <location>
        <begin position="24"/>
        <end position="26"/>
    </location>
</feature>
<feature type="strand" evidence="45">
    <location>
        <begin position="29"/>
        <end position="36"/>
    </location>
</feature>
<feature type="strand" evidence="44">
    <location>
        <begin position="40"/>
        <end position="42"/>
    </location>
</feature>
<feature type="helix" evidence="45">
    <location>
        <begin position="46"/>
        <end position="55"/>
    </location>
</feature>
<feature type="strand" evidence="45">
    <location>
        <begin position="66"/>
        <end position="70"/>
    </location>
</feature>
<feature type="strand" evidence="45">
    <location>
        <begin position="76"/>
        <end position="81"/>
    </location>
</feature>
<feature type="strand" evidence="45">
    <location>
        <begin position="84"/>
        <end position="86"/>
    </location>
</feature>
<feature type="helix" evidence="45">
    <location>
        <begin position="87"/>
        <end position="94"/>
    </location>
</feature>
<feature type="helix" evidence="45">
    <location>
        <begin position="100"/>
        <end position="119"/>
    </location>
</feature>
<feature type="helix" evidence="45">
    <location>
        <begin position="129"/>
        <end position="131"/>
    </location>
</feature>
<feature type="strand" evidence="45">
    <location>
        <begin position="132"/>
        <end position="134"/>
    </location>
</feature>
<feature type="strand" evidence="45">
    <location>
        <begin position="140"/>
        <end position="142"/>
    </location>
</feature>
<feature type="helix" evidence="44">
    <location>
        <begin position="145"/>
        <end position="147"/>
    </location>
</feature>
<feature type="helix" evidence="45">
    <location>
        <begin position="165"/>
        <end position="167"/>
    </location>
</feature>
<feature type="helix" evidence="45">
    <location>
        <begin position="170"/>
        <end position="173"/>
    </location>
</feature>
<feature type="helix" evidence="45">
    <location>
        <begin position="182"/>
        <end position="196"/>
    </location>
</feature>
<feature type="turn" evidence="45">
    <location>
        <begin position="197"/>
        <end position="199"/>
    </location>
</feature>
<feature type="helix" evidence="45">
    <location>
        <begin position="208"/>
        <end position="219"/>
    </location>
</feature>
<feature type="turn" evidence="45">
    <location>
        <begin position="224"/>
        <end position="226"/>
    </location>
</feature>
<feature type="helix" evidence="45">
    <location>
        <begin position="228"/>
        <end position="232"/>
    </location>
</feature>
<feature type="helix" evidence="45">
    <location>
        <begin position="248"/>
        <end position="250"/>
    </location>
</feature>
<feature type="helix" evidence="45">
    <location>
        <begin position="257"/>
        <end position="266"/>
    </location>
</feature>
<feature type="helix" evidence="45">
    <location>
        <begin position="271"/>
        <end position="273"/>
    </location>
</feature>
<feature type="helix" evidence="45">
    <location>
        <begin position="277"/>
        <end position="281"/>
    </location>
</feature>
<feature type="helix" evidence="45">
    <location>
        <begin position="284"/>
        <end position="286"/>
    </location>
</feature>
<feature type="strand" evidence="46">
    <location>
        <begin position="287"/>
        <end position="289"/>
    </location>
</feature>
<accession>Q00535</accession>
<accession>A1XKG3</accession>
<reference key="1">
    <citation type="journal article" date="1992" name="EMBO J.">
        <title>A family of human cdc2-related protein kinases.</title>
        <authorList>
            <person name="Meyerson M."/>
            <person name="Enders G.H."/>
            <person name="Wu C.-L."/>
            <person name="Su L.-K."/>
            <person name="Gorka C."/>
            <person name="Nelson C."/>
            <person name="Harlow E."/>
            <person name="Tsai L.-H."/>
        </authorList>
    </citation>
    <scope>NUCLEOTIDE SEQUENCE [MRNA] (ISOFORM 1)</scope>
    <source>
        <tissue>Fetal brain</tissue>
    </source>
</reference>
<reference key="2">
    <citation type="submission" date="1993-02" db="EMBL/GenBank/DDBJ databases">
        <authorList>
            <person name="Meyerson M."/>
        </authorList>
    </citation>
    <scope>SEQUENCE REVISION</scope>
</reference>
<reference key="3">
    <citation type="journal article" date="2010" name="Mol. Biol. Rep.">
        <title>Characterization of a novel human CDK5 splicing variant that inhibits Wnt/beta-catenin signaling.</title>
        <authorList>
            <person name="Li Q."/>
            <person name="Liu X."/>
            <person name="Zhang M."/>
            <person name="Ye G."/>
            <person name="Qiao Q."/>
            <person name="Ling Y."/>
            <person name="Wu Y."/>
            <person name="Zhang Y."/>
            <person name="Yu L."/>
        </authorList>
    </citation>
    <scope>NUCLEOTIDE SEQUENCE [MRNA] (ISOFORM 2)</scope>
    <scope>SUBCELLULAR LOCATION</scope>
    <scope>TISSUE SPECIFICITY</scope>
    <scope>INTERACTION WITH CTNNB1</scope>
    <scope>FUNCTION IN WNT/B-CATENIN SIGNALING PATHWAY</scope>
    <source>
        <tissue>Testis</tissue>
    </source>
</reference>
<reference key="4">
    <citation type="submission" date="2001-07" db="EMBL/GenBank/DDBJ databases">
        <authorList>
            <person name="Hu X."/>
            <person name="Xu Y."/>
            <person name="Zhang B."/>
            <person name="Peng X."/>
            <person name="Yuan J."/>
            <person name="Qiang B."/>
        </authorList>
    </citation>
    <scope>NUCLEOTIDE SEQUENCE [MRNA] (ISOFORM 1)</scope>
</reference>
<reference key="5">
    <citation type="submission" date="2003-05" db="EMBL/GenBank/DDBJ databases">
        <title>Cloning of human full-length CDSs in BD Creator(TM) system donor vector.</title>
        <authorList>
            <person name="Kalnine N."/>
            <person name="Chen X."/>
            <person name="Rolfs A."/>
            <person name="Halleck A."/>
            <person name="Hines L."/>
            <person name="Eisenstein S."/>
            <person name="Koundinya M."/>
            <person name="Raphael J."/>
            <person name="Moreira D."/>
            <person name="Kelley T."/>
            <person name="LaBaer J."/>
            <person name="Lin Y."/>
            <person name="Phelan M."/>
            <person name="Farmer A."/>
        </authorList>
    </citation>
    <scope>NUCLEOTIDE SEQUENCE [LARGE SCALE MRNA] (ISOFORM 1)</scope>
</reference>
<reference key="6">
    <citation type="journal article" date="2003" name="Nature">
        <title>The DNA sequence of human chromosome 7.</title>
        <authorList>
            <person name="Hillier L.W."/>
            <person name="Fulton R.S."/>
            <person name="Fulton L.A."/>
            <person name="Graves T.A."/>
            <person name="Pepin K.H."/>
            <person name="Wagner-McPherson C."/>
            <person name="Layman D."/>
            <person name="Maas J."/>
            <person name="Jaeger S."/>
            <person name="Walker R."/>
            <person name="Wylie K."/>
            <person name="Sekhon M."/>
            <person name="Becker M.C."/>
            <person name="O'Laughlin M.D."/>
            <person name="Schaller M.E."/>
            <person name="Fewell G.A."/>
            <person name="Delehaunty K.D."/>
            <person name="Miner T.L."/>
            <person name="Nash W.E."/>
            <person name="Cordes M."/>
            <person name="Du H."/>
            <person name="Sun H."/>
            <person name="Edwards J."/>
            <person name="Bradshaw-Cordum H."/>
            <person name="Ali J."/>
            <person name="Andrews S."/>
            <person name="Isak A."/>
            <person name="Vanbrunt A."/>
            <person name="Nguyen C."/>
            <person name="Du F."/>
            <person name="Lamar B."/>
            <person name="Courtney L."/>
            <person name="Kalicki J."/>
            <person name="Ozersky P."/>
            <person name="Bielicki L."/>
            <person name="Scott K."/>
            <person name="Holmes A."/>
            <person name="Harkins R."/>
            <person name="Harris A."/>
            <person name="Strong C.M."/>
            <person name="Hou S."/>
            <person name="Tomlinson C."/>
            <person name="Dauphin-Kohlberg S."/>
            <person name="Kozlowicz-Reilly A."/>
            <person name="Leonard S."/>
            <person name="Rohlfing T."/>
            <person name="Rock S.M."/>
            <person name="Tin-Wollam A.-M."/>
            <person name="Abbott A."/>
            <person name="Minx P."/>
            <person name="Maupin R."/>
            <person name="Strowmatt C."/>
            <person name="Latreille P."/>
            <person name="Miller N."/>
            <person name="Johnson D."/>
            <person name="Murray J."/>
            <person name="Woessner J.P."/>
            <person name="Wendl M.C."/>
            <person name="Yang S.-P."/>
            <person name="Schultz B.R."/>
            <person name="Wallis J.W."/>
            <person name="Spieth J."/>
            <person name="Bieri T.A."/>
            <person name="Nelson J.O."/>
            <person name="Berkowicz N."/>
            <person name="Wohldmann P.E."/>
            <person name="Cook L.L."/>
            <person name="Hickenbotham M.T."/>
            <person name="Eldred J."/>
            <person name="Williams D."/>
            <person name="Bedell J.A."/>
            <person name="Mardis E.R."/>
            <person name="Clifton S.W."/>
            <person name="Chissoe S.L."/>
            <person name="Marra M.A."/>
            <person name="Raymond C."/>
            <person name="Haugen E."/>
            <person name="Gillett W."/>
            <person name="Zhou Y."/>
            <person name="James R."/>
            <person name="Phelps K."/>
            <person name="Iadanoto S."/>
            <person name="Bubb K."/>
            <person name="Simms E."/>
            <person name="Levy R."/>
            <person name="Clendenning J."/>
            <person name="Kaul R."/>
            <person name="Kent W.J."/>
            <person name="Furey T.S."/>
            <person name="Baertsch R.A."/>
            <person name="Brent M.R."/>
            <person name="Keibler E."/>
            <person name="Flicek P."/>
            <person name="Bork P."/>
            <person name="Suyama M."/>
            <person name="Bailey J.A."/>
            <person name="Portnoy M.E."/>
            <person name="Torrents D."/>
            <person name="Chinwalla A.T."/>
            <person name="Gish W.R."/>
            <person name="Eddy S.R."/>
            <person name="McPherson J.D."/>
            <person name="Olson M.V."/>
            <person name="Eichler E.E."/>
            <person name="Green E.D."/>
            <person name="Waterston R.H."/>
            <person name="Wilson R.K."/>
        </authorList>
    </citation>
    <scope>NUCLEOTIDE SEQUENCE [LARGE SCALE GENOMIC DNA]</scope>
</reference>
<reference key="7">
    <citation type="journal article" date="2004" name="Genome Res.">
        <title>The status, quality, and expansion of the NIH full-length cDNA project: the Mammalian Gene Collection (MGC).</title>
        <authorList>
            <consortium name="The MGC Project Team"/>
        </authorList>
    </citation>
    <scope>NUCLEOTIDE SEQUENCE [LARGE SCALE MRNA] (ISOFORM 1)</scope>
    <source>
        <tissue>Lung</tissue>
    </source>
</reference>
<reference key="8">
    <citation type="journal article" date="1997" name="Eur. J. Biochem.">
        <title>Biochemical and cellular effects of roscovitine, a potent and selective inhibitor of the cyclin-dependent kinases cdc2, cdk2 and cdk5.</title>
        <authorList>
            <person name="Meijer L."/>
            <person name="Borgne A."/>
            <person name="Mulner O."/>
            <person name="Chong J.P.J."/>
            <person name="Blow J.J."/>
            <person name="Inagaki N."/>
            <person name="Inagaki M."/>
            <person name="Delcros J.-G."/>
            <person name="Moulinoux J.-P."/>
        </authorList>
    </citation>
    <scope>ACTIVITY REGULATION BY ROSCOVITINE AND OLOMOUCINE</scope>
</reference>
<reference key="9">
    <citation type="journal article" date="1998" name="J. Neurosci.">
        <title>Evidence for the participation of the neuron-specific CDK5 activator P35 during laminin-enhanced axonal growth.</title>
        <authorList>
            <person name="Paglini G."/>
            <person name="Pigino G."/>
            <person name="Kunda P."/>
            <person name="Morfini G."/>
            <person name="Maccioni R."/>
            <person name="Quiroga S."/>
            <person name="Ferreira A."/>
            <person name="Caceres A."/>
        </authorList>
    </citation>
    <scope>FUNCTION IN AXON GROWTH</scope>
</reference>
<reference key="10">
    <citation type="journal article" date="1999" name="Proc. Natl. Acad. Sci. U.S.A.">
        <title>Regulation of cyclin-dependent kinase 5 catalytic activity by phosphorylation.</title>
        <authorList>
            <person name="Sharma P."/>
            <person name="Sharma M."/>
            <person name="Amin N.D."/>
            <person name="Albers R.W."/>
            <person name="Pant H.C."/>
        </authorList>
    </citation>
    <scope>PHOSPHORYLATION AT SER-159</scope>
</reference>
<reference key="11">
    <citation type="journal article" date="2002" name="Brain Res. Mol. Brain Res.">
        <title>Influence of phosphorylation of p35, an activator of cyclin-dependent kinase 5 (cdk5), on the proteolysis of p35.</title>
        <authorList>
            <person name="Kerokoski P."/>
            <person name="Suuronen T."/>
            <person name="Salminen A."/>
            <person name="Soininen H."/>
            <person name="Pirttilae T."/>
        </authorList>
    </citation>
    <scope>FUNCTION AS P35/CDK5R1 KINASE</scope>
</reference>
<reference key="12">
    <citation type="journal article" date="2003" name="Biochem. Biophys. Res. Commun.">
        <title>Apoptosis-associated tyrosine kinase is a Cdk5 activator p35 binding protein.</title>
        <authorList>
            <person name="Honma N."/>
            <person name="Asada A."/>
            <person name="Takeshita S."/>
            <person name="Enomoto M."/>
            <person name="Yamakawa E."/>
            <person name="Tsutsumi K."/>
            <person name="Saito T."/>
            <person name="Satoh T."/>
            <person name="Itoh H."/>
            <person name="Kaziro Y."/>
            <person name="Kishimoto T."/>
            <person name="Hisanaga S."/>
        </authorList>
    </citation>
    <scope>INTERACTION WITH AATK</scope>
</reference>
<reference key="13">
    <citation type="journal article" date="2003" name="Neuron">
        <title>Cdk5-mediated inhibition of the protective effects of transcription factor MEF2 in neurotoxicity-induced apoptosis.</title>
        <authorList>
            <person name="Gong X."/>
            <person name="Tang X."/>
            <person name="Wiedmann M."/>
            <person name="Wang X."/>
            <person name="Peng J."/>
            <person name="Zheng D."/>
            <person name="Blair L.A.C."/>
            <person name="Marshall J."/>
            <person name="Mao Z."/>
        </authorList>
    </citation>
    <scope>FUNCTION AS MEF2A KINASE</scope>
    <scope>ACTIVITY REGULATION</scope>
    <scope>SUBCELLULAR LOCATION</scope>
</reference>
<reference key="14">
    <citation type="journal article" date="2005" name="J. Neurochem.">
        <title>Activation of latent cyclin-dependent kinase 5 (Cdk5)-p35 complexes by membrane dissociation.</title>
        <authorList>
            <person name="Zhu Y.-S."/>
            <person name="Saito T."/>
            <person name="Asada A."/>
            <person name="Maekawa S."/>
            <person name="Hisanaga S."/>
        </authorList>
    </citation>
    <scope>FUNCTION AS P35 KINASE</scope>
    <scope>SUBCELLULAR LOCATION</scope>
    <scope>ACTIVITY REGULATION</scope>
</reference>
<reference key="15">
    <citation type="journal article" date="2007" name="J. Biol. Chem.">
        <title>Suppression of calpain-dependent cleavage of the CDK5 activator p35 to p25 by site-specific phosphorylation.</title>
        <authorList>
            <person name="Kamei H."/>
            <person name="Saito T."/>
            <person name="Ozawa M."/>
            <person name="Fujita Y."/>
            <person name="Asada A."/>
            <person name="Bibb J.A."/>
            <person name="Saido T.C."/>
            <person name="Sorimachi H."/>
            <person name="Hisanaga S."/>
        </authorList>
    </citation>
    <scope>FUNCTION AS P35/CDK5R KINASE</scope>
</reference>
<reference key="16">
    <citation type="journal article" date="2007" name="J. Cell. Biochem.">
        <title>cdk5 modulates beta- and delta-catenin/Pin1 interactions in neuronal cells.</title>
        <authorList>
            <person name="Munoz J.P."/>
            <person name="Huichalaf C.H."/>
            <person name="Orellana D."/>
            <person name="Maccioni R.B."/>
        </authorList>
    </citation>
    <scope>FUNCTION AS CTNNB1 AND CTNND2 KINASE</scope>
    <scope>INTERACTION WITH CTNNB1 AND CTNND2</scope>
    <scope>SUBCELLULAR LOCATION</scope>
    <scope>TISSUE SPECIFICITY</scope>
</reference>
<reference key="17">
    <citation type="journal article" date="2007" name="J. Cell Sci.">
        <title>Stabilization and activation of p53 induced by Cdk5 contributes to neuronal cell death.</title>
        <authorList>
            <person name="Lee J.-H."/>
            <person name="Kim H.-S."/>
            <person name="Lee S.-J."/>
            <person name="Kim K.-T."/>
        </authorList>
    </citation>
    <scope>FUNCTION AS P53/TP53 KINASE</scope>
    <scope>INTERACTION WITH P53/TP53</scope>
    <scope>SUBCELLULAR LOCATION</scope>
</reference>
<reference key="18">
    <citation type="journal article" date="2007" name="J. Cell Sci.">
        <title>Cdk5 regulates differentiation of oligodendrocyte precursor cells through the direct phosphorylation of paxillin.</title>
        <authorList>
            <person name="Miyamoto Y."/>
            <person name="Yamauchi J."/>
            <person name="Chan J.R."/>
            <person name="Okada A."/>
            <person name="Tomooka Y."/>
            <person name="Hisanaga S."/>
            <person name="Tanoue A."/>
        </authorList>
    </citation>
    <scope>FUNCTION AS PXN KINASE</scope>
</reference>
<reference key="19">
    <citation type="journal article" date="2007" name="J. Neurosci.">
        <title>Phosphorylation of huntingtin by cyclin-dependent kinase 5 is induced by DNA damage and regulates wild-type and mutant huntingtin toxicity in neurons.</title>
        <authorList>
            <person name="Anne S.L."/>
            <person name="Saudou F."/>
            <person name="Humbert S."/>
        </authorList>
    </citation>
    <scope>FUNCTION AS HUNTINGTIN KINASE</scope>
    <scope>ACTIVITY REGULATION BY ROSCOVITINE</scope>
</reference>
<reference key="20">
    <citation type="journal article" date="2007" name="J. Neurosci. Res.">
        <title>Regulation of membrane association and kinase activity of Cdk5-p35 by phosphorylation of p35.</title>
        <authorList>
            <person name="Sato K."/>
            <person name="Zhu Y.-S."/>
            <person name="Saito T."/>
            <person name="Yotsumoto K."/>
            <person name="Asada A."/>
            <person name="Hasegawa M."/>
            <person name="Hisanaga S."/>
        </authorList>
    </citation>
    <scope>FUNCTION AS P35/CDK5R KINASE</scope>
    <scope>INTERACTION WITH P35/CDK5R</scope>
    <scope>SUBCELLULAR LOCATION</scope>
</reference>
<reference key="21">
    <citation type="journal article" date="2007" name="Nat. Neurosci.">
        <title>Cdk5 regulates EphA4-mediated dendritic spine retraction through an ephexin1-dependent mechanism.</title>
        <authorList>
            <person name="Fu W.Y."/>
            <person name="Chen Y."/>
            <person name="Sahin M."/>
            <person name="Zhao X.S."/>
            <person name="Shi L."/>
            <person name="Bikoff J.B."/>
            <person name="Lai K.O."/>
            <person name="Yung W.H."/>
            <person name="Fu A.K."/>
            <person name="Greenberg M.E."/>
            <person name="Ip N.Y."/>
        </authorList>
    </citation>
    <scope>PHOSPHORYLATION AT TYR-15 BY EPHA4</scope>
</reference>
<reference key="22">
    <citation type="journal article" date="2008" name="J. Neurochem.">
        <title>Myristoylation of p39 and p35 is a determinant of cytoplasmic or nuclear localization of active cyclin-dependent kinase 5 complexes.</title>
        <authorList>
            <person name="Asada A."/>
            <person name="Yamamoto N."/>
            <person name="Gohda M."/>
            <person name="Saito T."/>
            <person name="Hayashi N."/>
            <person name="Hisanaga S."/>
        </authorList>
    </citation>
    <scope>SUBCELLULAR LOCATION</scope>
</reference>
<reference key="23">
    <citation type="journal article" date="2008" name="Mol. Cell">
        <title>Kinase-selective enrichment enables quantitative phosphoproteomics of the kinome across the cell cycle.</title>
        <authorList>
            <person name="Daub H."/>
            <person name="Olsen J.V."/>
            <person name="Bairlein M."/>
            <person name="Gnad F."/>
            <person name="Oppermann F.S."/>
            <person name="Korner R."/>
            <person name="Greff Z."/>
            <person name="Keri G."/>
            <person name="Stemmann O."/>
            <person name="Mann M."/>
        </authorList>
    </citation>
    <scope>PHOSPHORYLATION [LARGE SCALE ANALYSIS] AT SER-72</scope>
    <scope>IDENTIFICATION BY MASS SPECTROMETRY [LARGE SCALE ANALYSIS]</scope>
    <source>
        <tissue>Cervix carcinoma</tissue>
    </source>
</reference>
<reference key="24">
    <citation type="journal article" date="2008" name="Neuron">
        <title>Deregulation of HDAC1 by p25/Cdk5 in neurotoxicity.</title>
        <authorList>
            <person name="Kim D."/>
            <person name="Frank C.L."/>
            <person name="Dobbin M.M."/>
            <person name="Tsunemoto R.K."/>
            <person name="Tu W."/>
            <person name="Peng P.L."/>
            <person name="Guan J.S."/>
            <person name="Lee B.H."/>
            <person name="Moy L.Y."/>
            <person name="Giusti P."/>
            <person name="Broodie N."/>
            <person name="Mazitschek R."/>
            <person name="Delalle I."/>
            <person name="Haggarty S.J."/>
            <person name="Neve R.L."/>
            <person name="Lu Y."/>
            <person name="Tsai L.H."/>
        </authorList>
    </citation>
    <scope>FUNCTION AS HDAC REGULATOR</scope>
</reference>
<reference key="25">
    <citation type="journal article" date="2009" name="Anal. Chem.">
        <title>Lys-N and trypsin cover complementary parts of the phosphoproteome in a refined SCX-based approach.</title>
        <authorList>
            <person name="Gauci S."/>
            <person name="Helbig A.O."/>
            <person name="Slijper M."/>
            <person name="Krijgsveld J."/>
            <person name="Heck A.J."/>
            <person name="Mohammed S."/>
        </authorList>
    </citation>
    <scope>IDENTIFICATION BY MASS SPECTROMETRY [LARGE SCALE ANALYSIS]</scope>
</reference>
<reference key="26">
    <citation type="journal article" date="2009" name="Mol. Cell. Proteomics">
        <title>Large-scale proteomics analysis of the human kinome.</title>
        <authorList>
            <person name="Oppermann F.S."/>
            <person name="Gnad F."/>
            <person name="Olsen J.V."/>
            <person name="Hornberger R."/>
            <person name="Greff Z."/>
            <person name="Keri G."/>
            <person name="Mann M."/>
            <person name="Daub H."/>
        </authorList>
    </citation>
    <scope>PHOSPHORYLATION [LARGE SCALE ANALYSIS] AT SER-72</scope>
    <scope>IDENTIFICATION BY MASS SPECTROMETRY [LARGE SCALE ANALYSIS]</scope>
</reference>
<reference key="27">
    <citation type="journal article" date="2009" name="Science">
        <title>Lysine acetylation targets protein complexes and co-regulates major cellular functions.</title>
        <authorList>
            <person name="Choudhary C."/>
            <person name="Kumar C."/>
            <person name="Gnad F."/>
            <person name="Nielsen M.L."/>
            <person name="Rehman M."/>
            <person name="Walther T.C."/>
            <person name="Olsen J.V."/>
            <person name="Mann M."/>
        </authorList>
    </citation>
    <scope>ACETYLATION [LARGE SCALE ANALYSIS] AT LYS-56</scope>
    <scope>IDENTIFICATION BY MASS SPECTROMETRY [LARGE SCALE ANALYSIS]</scope>
</reference>
<reference key="28">
    <citation type="journal article" date="2010" name="J. Biol. Chem.">
        <title>Cyclin-dependent kinase 5 regulates endothelial cell migration and angiogenesis.</title>
        <authorList>
            <person name="Liebl J."/>
            <person name="Weitensteiner S.B."/>
            <person name="Vereb G."/>
            <person name="Takacs L."/>
            <person name="Fuerst R."/>
            <person name="Vollmar A.M."/>
            <person name="Zahler S."/>
        </authorList>
    </citation>
    <scope>FUNCTION IN ANGIOGENESIS</scope>
</reference>
<reference key="29">
    <citation type="journal article" date="2010" name="J. Cell. Biochem.">
        <title>CDK5 phosphorylates eNOS at Ser-113 and regulates NO production.</title>
        <authorList>
            <person name="Lee C.-H."/>
            <person name="Wei Y.-W."/>
            <person name="Huang Y.-T."/>
            <person name="Lin Y.-T."/>
            <person name="Lee Y.-C."/>
            <person name="Lee K.-H."/>
            <person name="Lu P.-J."/>
        </authorList>
    </citation>
    <scope>FUNCTION AS NOS3 KINASE</scope>
</reference>
<reference key="30">
    <citation type="journal article" date="2011" name="BMC Syst. Biol.">
        <title>Initial characterization of the human central proteome.</title>
        <authorList>
            <person name="Burkard T.R."/>
            <person name="Planyavsky M."/>
            <person name="Kaupe I."/>
            <person name="Breitwieser F.P."/>
            <person name="Buerckstuemmer T."/>
            <person name="Bennett K.L."/>
            <person name="Superti-Furga G."/>
            <person name="Colinge J."/>
        </authorList>
    </citation>
    <scope>IDENTIFICATION BY MASS SPECTROMETRY [LARGE SCALE ANALYSIS]</scope>
</reference>
<reference key="31">
    <citation type="journal article" date="2011" name="Bioorg. Med. Chem.">
        <title>Design, synthesis, and testing of an 6-O-linked series of benzimidazole based inhibitors of CDK5/p25.</title>
        <authorList>
            <person name="Jain P."/>
            <person name="Flaherty P.T."/>
            <person name="Yi S."/>
            <person name="Chopra I."/>
            <person name="Bleasdell G."/>
            <person name="Lipay J."/>
            <person name="Ferandin Y."/>
            <person name="Meijer L."/>
            <person name="Madura J.D."/>
        </authorList>
    </citation>
    <scope>INHIBITORS</scope>
</reference>
<reference key="32">
    <citation type="journal article" date="2011" name="Cell. Mol. Life Sci.">
        <title>Cdk5 targets active Src for ubiquitin-dependent degradation by phosphorylating Src(S75).</title>
        <authorList>
            <person name="Pan Q."/>
            <person name="Qiao F."/>
            <person name="Gao C."/>
            <person name="Norman B."/>
            <person name="Optican L."/>
            <person name="Zelenka P.S."/>
        </authorList>
    </citation>
    <scope>FUNCTION AS SRC KINASE</scope>
</reference>
<reference key="33">
    <citation type="journal article" date="2012" name="J. Cell. Physiol.">
        <title>Cdk5 mediates vimentin Ser56 phosphorylation during GTP-induced secretion by neutrophils.</title>
        <authorList>
            <person name="Lee K.Y."/>
            <person name="Liu L."/>
            <person name="Jin Y."/>
            <person name="Fu S.B."/>
            <person name="Rosales J.L."/>
        </authorList>
    </citation>
    <scope>FUNCTION AS VIM KINASE</scope>
    <scope>SUBCELLULAR LOCATION</scope>
</reference>
<reference key="34">
    <citation type="journal article" date="2011" name="J. Neurochem.">
        <title>Glutathione-S-transferase P1 is a critical regulator of Cdk5 kinase activity.</title>
        <authorList>
            <person name="Sun K.H."/>
            <person name="Chang K.H."/>
            <person name="Clawson S."/>
            <person name="Ghosh S."/>
            <person name="Mirzaei H."/>
            <person name="Regnier F."/>
            <person name="Shah K."/>
        </authorList>
    </citation>
    <scope>ACTIVITY REGULATION</scope>
    <scope>INTERACTION WITH GSTP1</scope>
</reference>
<reference key="35">
    <citation type="journal article" date="2011" name="Mol. Biol. Cell">
        <title>High NaCl-induced activation of CDK5 increases phosphorylation of the osmoprotective transcription factor TonEBP/OREBP at threonine 135, which contributes to its rapid nuclear localization.</title>
        <authorList>
            <person name="Gallazzini M."/>
            <person name="Heussler G.E."/>
            <person name="Kunin M."/>
            <person name="Izumi Y."/>
            <person name="Burg M.B."/>
            <person name="Ferraris J.D."/>
        </authorList>
    </citation>
    <scope>FUNCTION AS TONEBP/NFAT5 KINASE</scope>
</reference>
<reference key="36">
    <citation type="journal article" date="2011" name="Nat. Cell Biol.">
        <title>Cdk5-mediated phosphorylation of endophilin B1 is required for induced autophagy in models of Parkinson's disease.</title>
        <authorList>
            <person name="Wong A.S."/>
            <person name="Lee R.H."/>
            <person name="Cheung A.Y."/>
            <person name="Yeung P.K."/>
            <person name="Chung S.K."/>
            <person name="Cheung Z.H."/>
            <person name="Ip N.Y."/>
        </authorList>
    </citation>
    <scope>FUNCTION AS SH3GLB1 KINASE</scope>
</reference>
<reference key="37">
    <citation type="journal article" date="2011" name="Proc. Natl. Acad. Sci. U.S.A.">
        <title>Phosphorylation of glutamyl-prolyl tRNA synthetase by cyclin-dependent kinase 5 dictates transcript-selective translational control.</title>
        <authorList>
            <person name="Arif A."/>
            <person name="Jia J."/>
            <person name="Moodt R.A."/>
            <person name="DiCorleto P.E."/>
            <person name="Fox P.L."/>
        </authorList>
    </citation>
    <scope>FUNCTION AS EPRS KINASE</scope>
</reference>
<reference key="38">
    <citation type="journal article" date="2001" name="Nat. Rev. Mol. Cell Biol.">
        <title>A decade of CDK5.</title>
        <authorList>
            <person name="Dhavan R."/>
            <person name="Tsai L.H."/>
        </authorList>
    </citation>
    <scope>REVIEW</scope>
</reference>
<reference key="39">
    <citation type="journal article" date="2009" name="Nat. Rev. Cancer">
        <title>Cell cycle, CDKs and cancer: a changing paradigm.</title>
        <authorList>
            <person name="Malumbres M."/>
            <person name="Barbacid M."/>
        </authorList>
    </citation>
    <scope>REVIEW ON INHIBITORS</scope>
    <scope>GENE FAMILY</scope>
</reference>
<reference key="40">
    <citation type="journal article" date="2009" name="Trends Neurosci.">
        <title>Making a neuron: Cdk5 in embryonic and adult neurogenesis.</title>
        <authorList>
            <person name="Jessberger S."/>
            <person name="Gage F.H."/>
            <person name="Eisch A.J."/>
            <person name="Lagace D.C."/>
        </authorList>
    </citation>
    <scope>REVIEW ON NEURONAL PHYSIOLOGY</scope>
</reference>
<reference key="41">
    <citation type="journal article" date="2010" name="Cell Cycle">
        <title>Cdk5, the multifunctional surveyor.</title>
        <authorList>
            <person name="Lalioti V."/>
            <person name="Pulido D."/>
            <person name="Sandoval I.V."/>
        </authorList>
    </citation>
    <scope>FUNCTION</scope>
</reference>
<reference key="42">
    <citation type="journal article" date="2010" name="J. Neurochem.">
        <title>Regulation and role of cyclin-dependent kinase activity in neuronal survival and death.</title>
        <authorList>
            <person name="Hisanaga S."/>
            <person name="Endo R."/>
        </authorList>
    </citation>
    <scope>REVIEW ON REGULATION</scope>
</reference>
<reference key="43">
    <citation type="journal article" date="2011" name="Cell Cycle">
        <title>Nucleocytoplasmic Cdk5 is involved in neuronal cell cycle and death in post-mitotic neurons.</title>
        <authorList>
            <person name="Zhang J."/>
            <person name="Herrup K."/>
        </authorList>
    </citation>
    <scope>REVIEW ON NEURON DEVELOPMENT</scope>
</reference>
<reference key="44">
    <citation type="journal article" date="2011" name="Mech. Ageing Dev.">
        <title>Cdk5: Mediator of neuronal development, death and the response to DNA damage.</title>
        <authorList>
            <person name="Zhu J."/>
            <person name="Li W."/>
            <person name="Mao Z."/>
        </authorList>
    </citation>
    <scope>REVIEW ON NEURON DEVELOPMENT</scope>
</reference>
<reference key="45">
    <citation type="journal article" date="2011" name="Prog. Neurobiol.">
        <title>Cdk5: multitasking between physiological and pathological conditions.</title>
        <authorList>
            <person name="Lopes J.P."/>
            <person name="Agostinho P."/>
        </authorList>
    </citation>
    <scope>REVIEW ON NEURONS</scope>
</reference>
<reference key="46">
    <citation type="journal article" date="2013" name="J. Biol. Chem.">
        <title>Cyclin-dependent kinase 5 (Cdk5) regulates the function of CLOCK protein by direct phosphorylation.</title>
        <authorList>
            <person name="Kwak Y."/>
            <person name="Jeong J."/>
            <person name="Lee S."/>
            <person name="Park Y.U."/>
            <person name="Lee S.A."/>
            <person name="Han D.H."/>
            <person name="Kim J.H."/>
            <person name="Ohshima T."/>
            <person name="Mikoshiba K."/>
            <person name="Suh Y.H."/>
            <person name="Cho S."/>
            <person name="Park S.K."/>
        </authorList>
    </citation>
    <scope>FUNCTION</scope>
    <scope>INTERACTION WITH CLOCK</scope>
</reference>
<reference key="47">
    <citation type="journal article" date="2013" name="J. Proteome Res.">
        <title>Toward a comprehensive characterization of a human cancer cell phosphoproteome.</title>
        <authorList>
            <person name="Zhou H."/>
            <person name="Di Palma S."/>
            <person name="Preisinger C."/>
            <person name="Peng M."/>
            <person name="Polat A.N."/>
            <person name="Heck A.J."/>
            <person name="Mohammed S."/>
        </authorList>
    </citation>
    <scope>PHOSPHORYLATION [LARGE SCALE ANALYSIS] AT THR-17</scope>
    <scope>IDENTIFICATION BY MASS SPECTROMETRY [LARGE SCALE ANALYSIS]</scope>
    <source>
        <tissue>Cervix carcinoma</tissue>
        <tissue>Erythroleukemia</tissue>
    </source>
</reference>
<reference key="48">
    <citation type="journal article" date="2015" name="Hum. Genet.">
        <title>Autosomal recessive lissencephaly with cerebellar hypoplasia is associated with a loss-of-function mutation in CDK5.</title>
        <authorList>
            <person name="Magen D."/>
            <person name="Ofir A."/>
            <person name="Berger L."/>
            <person name="Goldsher D."/>
            <person name="Eran A."/>
            <person name="Katib N."/>
            <person name="Nijem Y."/>
            <person name="Vlodavsky E."/>
            <person name="Tzur S."/>
            <person name="Zur S."/>
            <person name="Behar D.M."/>
            <person name="Fellig Y."/>
            <person name="Mandel H."/>
        </authorList>
    </citation>
    <scope>INVOLVEMENT IN LIS7</scope>
</reference>
<reference key="49">
    <citation type="journal article" date="2001" name="Mol. Cell">
        <title>Structure and regulation of the CDK5-p25(nck5a) complex.</title>
        <authorList>
            <person name="Tarricone C."/>
            <person name="Dhavan R."/>
            <person name="Peng J."/>
            <person name="Areces L.B."/>
            <person name="Tsai L.-H."/>
            <person name="Musacchio A."/>
        </authorList>
    </citation>
    <scope>X-RAY CRYSTALLOGRAPHY (2.65 ANGSTROMS) IN COMPLEX WITH P25</scope>
    <scope>MUTAGENESIS OF SER-159</scope>
</reference>
<reference key="50">
    <citation type="journal article" date="2005" name="Chem. Biol.">
        <title>Defining Cdk5 ligand chemical space with small molecule inhibitors of tau phosphorylation.</title>
        <authorList>
            <person name="Ahn J.S."/>
            <person name="Radhakrishnan M.L."/>
            <person name="Mapelli M."/>
            <person name="Choi S."/>
            <person name="Tidor B."/>
            <person name="Cuny G.D."/>
            <person name="Musacchio A."/>
            <person name="Yeh L.A."/>
            <person name="Kosik K.S."/>
        </authorList>
    </citation>
    <scope>X-RAY CRYSTALLOGRAPHY (1.95 ANGSTROMS)</scope>
</reference>
<reference key="51">
    <citation type="journal article" date="2005" name="J. Med. Chem.">
        <title>Mechanism of CDK5/p25 binding by CDK inhibitors.</title>
        <authorList>
            <person name="Mapelli M."/>
            <person name="Massimiliano L."/>
            <person name="Crovace C."/>
            <person name="Seeliger M.A."/>
            <person name="Tsai L.H."/>
            <person name="Meijer L."/>
            <person name="Musacchio A."/>
        </authorList>
    </citation>
    <scope>X-RAY CRYSTALLOGRAPHY (2.20 ANGSTROMS) IN COMPLEX WITH INHIBITORS AND P25</scope>
    <scope>PHOSPHORYLATION AT TYR-15</scope>
</reference>
<reference key="52">
    <citation type="journal article" date="2007" name="Nature">
        <title>Patterns of somatic mutation in human cancer genomes.</title>
        <authorList>
            <person name="Greenman C."/>
            <person name="Stephens P."/>
            <person name="Smith R."/>
            <person name="Dalgliesh G.L."/>
            <person name="Hunter C."/>
            <person name="Bignell G."/>
            <person name="Davies H."/>
            <person name="Teague J."/>
            <person name="Butler A."/>
            <person name="Stevens C."/>
            <person name="Edkins S."/>
            <person name="O'Meara S."/>
            <person name="Vastrik I."/>
            <person name="Schmidt E.E."/>
            <person name="Avis T."/>
            <person name="Barthorpe S."/>
            <person name="Bhamra G."/>
            <person name="Buck G."/>
            <person name="Choudhury B."/>
            <person name="Clements J."/>
            <person name="Cole J."/>
            <person name="Dicks E."/>
            <person name="Forbes S."/>
            <person name="Gray K."/>
            <person name="Halliday K."/>
            <person name="Harrison R."/>
            <person name="Hills K."/>
            <person name="Hinton J."/>
            <person name="Jenkinson A."/>
            <person name="Jones D."/>
            <person name="Menzies A."/>
            <person name="Mironenko T."/>
            <person name="Perry J."/>
            <person name="Raine K."/>
            <person name="Richardson D."/>
            <person name="Shepherd R."/>
            <person name="Small A."/>
            <person name="Tofts C."/>
            <person name="Varian J."/>
            <person name="Webb T."/>
            <person name="West S."/>
            <person name="Widaa S."/>
            <person name="Yates A."/>
            <person name="Cahill D.P."/>
            <person name="Louis D.N."/>
            <person name="Goldstraw P."/>
            <person name="Nicholson A.G."/>
            <person name="Brasseur F."/>
            <person name="Looijenga L."/>
            <person name="Weber B.L."/>
            <person name="Chiew Y.-E."/>
            <person name="DeFazio A."/>
            <person name="Greaves M.F."/>
            <person name="Green A.R."/>
            <person name="Campbell P."/>
            <person name="Birney E."/>
            <person name="Easton D.F."/>
            <person name="Chenevix-Trench G."/>
            <person name="Tan M.-H."/>
            <person name="Khoo S.K."/>
            <person name="Teh B.T."/>
            <person name="Yuen S.T."/>
            <person name="Leung S.Y."/>
            <person name="Wooster R."/>
            <person name="Futreal P.A."/>
            <person name="Stratton M.R."/>
        </authorList>
    </citation>
    <scope>VARIANT [LARGE SCALE ANALYSIS] ASP-225</scope>
</reference>
<name>CDK5_HUMAN</name>
<dbReference type="EC" id="2.7.11.1"/>
<dbReference type="EMBL" id="X66364">
    <property type="protein sequence ID" value="CAA47007.1"/>
    <property type="molecule type" value="mRNA"/>
</dbReference>
<dbReference type="EMBL" id="DQ411039">
    <property type="protein sequence ID" value="ABD66016.1"/>
    <property type="molecule type" value="mRNA"/>
</dbReference>
<dbReference type="EMBL" id="AY049778">
    <property type="protein sequence ID" value="AAL15435.1"/>
    <property type="molecule type" value="mRNA"/>
</dbReference>
<dbReference type="EMBL" id="BT006680">
    <property type="protein sequence ID" value="AAP35326.1"/>
    <property type="molecule type" value="mRNA"/>
</dbReference>
<dbReference type="EMBL" id="AC010973">
    <property type="status" value="NOT_ANNOTATED_CDS"/>
    <property type="molecule type" value="Genomic_DNA"/>
</dbReference>
<dbReference type="EMBL" id="BC005115">
    <property type="protein sequence ID" value="AAH05115.1"/>
    <property type="molecule type" value="mRNA"/>
</dbReference>
<dbReference type="CCDS" id="CCDS47748.1">
    <molecule id="Q00535-1"/>
</dbReference>
<dbReference type="CCDS" id="CCDS55184.1">
    <molecule id="Q00535-2"/>
</dbReference>
<dbReference type="PIR" id="S23386">
    <property type="entry name" value="S23386"/>
</dbReference>
<dbReference type="RefSeq" id="NP_001157882.1">
    <molecule id="Q00535-2"/>
    <property type="nucleotide sequence ID" value="NM_001164410.3"/>
</dbReference>
<dbReference type="RefSeq" id="NP_004926.1">
    <molecule id="Q00535-1"/>
    <property type="nucleotide sequence ID" value="NM_004935.4"/>
</dbReference>
<dbReference type="PDB" id="1H4L">
    <property type="method" value="X-ray"/>
    <property type="resolution" value="2.65 A"/>
    <property type="chains" value="A/B=1-292"/>
</dbReference>
<dbReference type="PDB" id="1UNG">
    <property type="method" value="X-ray"/>
    <property type="resolution" value="2.30 A"/>
    <property type="chains" value="A/B=1-292"/>
</dbReference>
<dbReference type="PDB" id="1UNH">
    <property type="method" value="X-ray"/>
    <property type="resolution" value="2.35 A"/>
    <property type="chains" value="A/B=1-292"/>
</dbReference>
<dbReference type="PDB" id="1UNL">
    <property type="method" value="X-ray"/>
    <property type="resolution" value="2.20 A"/>
    <property type="chains" value="A/B=1-292"/>
</dbReference>
<dbReference type="PDB" id="3O0G">
    <property type="method" value="X-ray"/>
    <property type="resolution" value="1.95 A"/>
    <property type="chains" value="A/B=1-292"/>
</dbReference>
<dbReference type="PDB" id="4AU8">
    <property type="method" value="X-ray"/>
    <property type="resolution" value="1.90 A"/>
    <property type="chains" value="A/B=2-292"/>
</dbReference>
<dbReference type="PDB" id="7VDP">
    <property type="method" value="X-ray"/>
    <property type="resolution" value="2.09 A"/>
    <property type="chains" value="A/B=2-292"/>
</dbReference>
<dbReference type="PDB" id="7VDQ">
    <property type="method" value="X-ray"/>
    <property type="resolution" value="2.91 A"/>
    <property type="chains" value="A/B=2-292"/>
</dbReference>
<dbReference type="PDB" id="7VDR">
    <property type="method" value="X-ray"/>
    <property type="resolution" value="2.55 A"/>
    <property type="chains" value="A/B=2-292"/>
</dbReference>
<dbReference type="PDB" id="7VDS">
    <property type="method" value="X-ray"/>
    <property type="resolution" value="3.05 A"/>
    <property type="chains" value="A/B=2-292"/>
</dbReference>
<dbReference type="PDBsum" id="1H4L"/>
<dbReference type="PDBsum" id="1UNG"/>
<dbReference type="PDBsum" id="1UNH"/>
<dbReference type="PDBsum" id="1UNL"/>
<dbReference type="PDBsum" id="3O0G"/>
<dbReference type="PDBsum" id="4AU8"/>
<dbReference type="PDBsum" id="7VDP"/>
<dbReference type="PDBsum" id="7VDQ"/>
<dbReference type="PDBsum" id="7VDR"/>
<dbReference type="PDBsum" id="7VDS"/>
<dbReference type="SMR" id="Q00535"/>
<dbReference type="BioGRID" id="107455">
    <property type="interactions" value="218"/>
</dbReference>
<dbReference type="ComplexPortal" id="CPX-2201">
    <property type="entry name" value="Cyclin-dependent protein kinase 5 holoenzyme complex, p35 variant"/>
</dbReference>
<dbReference type="ComplexPortal" id="CPX-3141">
    <property type="entry name" value="Cyclin-dependent protein kinase 5 holoenzyme complex, p39 variant"/>
</dbReference>
<dbReference type="ComplexPortal" id="CPX-3142">
    <property type="entry name" value="Cyclin-dependent protein kinase 5 holoenzyme complex, p25 variant"/>
</dbReference>
<dbReference type="CORUM" id="Q00535"/>
<dbReference type="DIP" id="DIP-24221N"/>
<dbReference type="ELM" id="Q00535"/>
<dbReference type="FunCoup" id="Q00535">
    <property type="interactions" value="1204"/>
</dbReference>
<dbReference type="IntAct" id="Q00535">
    <property type="interactions" value="99"/>
</dbReference>
<dbReference type="MINT" id="Q00535"/>
<dbReference type="STRING" id="9606.ENSP00000419782"/>
<dbReference type="BindingDB" id="Q00535"/>
<dbReference type="ChEMBL" id="CHEMBL4036"/>
<dbReference type="DrugBank" id="DB07364">
    <property type="generic name" value="6-PHENYL[5H]PYRROLO[2,3-B]PYRAZINE"/>
</dbReference>
<dbReference type="DrugBank" id="DB04014">
    <property type="generic name" value="Alsterpaullone"/>
</dbReference>
<dbReference type="DrugBank" id="DB03496">
    <property type="generic name" value="Alvocidib"/>
</dbReference>
<dbReference type="DrugBank" id="DB02950">
    <property type="generic name" value="Hymenialdisine"/>
</dbReference>
<dbReference type="DrugBank" id="DB02052">
    <property type="generic name" value="Indirubin-3'-monoxime"/>
</dbReference>
<dbReference type="DrugBank" id="DB02116">
    <property type="generic name" value="Olomoucine"/>
</dbReference>
<dbReference type="DrugBank" id="DB02733">
    <property type="generic name" value="Purvalanol"/>
</dbReference>
<dbReference type="DrugBank" id="DB03428">
    <property type="generic name" value="SU9516"/>
</dbReference>
<dbReference type="DrugBank" id="DB15442">
    <property type="generic name" value="Trilaciclib"/>
</dbReference>
<dbReference type="DrugCentral" id="Q00535"/>
<dbReference type="GuidetoPHARMACOLOGY" id="1977"/>
<dbReference type="GlyCosmos" id="Q00535">
    <property type="glycosylation" value="4 sites, 1 glycan"/>
</dbReference>
<dbReference type="GlyGen" id="Q00535">
    <property type="glycosylation" value="6 sites, 1 O-linked glycan (4 sites)"/>
</dbReference>
<dbReference type="iPTMnet" id="Q00535"/>
<dbReference type="PhosphoSitePlus" id="Q00535"/>
<dbReference type="SwissPalm" id="Q00535"/>
<dbReference type="BioMuta" id="CDK5"/>
<dbReference type="DMDM" id="4033704"/>
<dbReference type="CPTAC" id="CPTAC-2934"/>
<dbReference type="jPOST" id="Q00535"/>
<dbReference type="MassIVE" id="Q00535"/>
<dbReference type="PaxDb" id="9606-ENSP00000419782"/>
<dbReference type="PeptideAtlas" id="Q00535"/>
<dbReference type="ProteomicsDB" id="57852">
    <molecule id="Q00535-1"/>
</dbReference>
<dbReference type="ProteomicsDB" id="57853">
    <molecule id="Q00535-2"/>
</dbReference>
<dbReference type="Pumba" id="Q00535"/>
<dbReference type="Antibodypedia" id="4556">
    <property type="antibodies" value="1028 antibodies from 43 providers"/>
</dbReference>
<dbReference type="DNASU" id="1020"/>
<dbReference type="Ensembl" id="ENST00000297518.4">
    <molecule id="Q00535-2"/>
    <property type="protein sequence ID" value="ENSP00000297518.4"/>
    <property type="gene ID" value="ENSG00000164885.13"/>
</dbReference>
<dbReference type="Ensembl" id="ENST00000485972.6">
    <molecule id="Q00535-1"/>
    <property type="protein sequence ID" value="ENSP00000419782.1"/>
    <property type="gene ID" value="ENSG00000164885.13"/>
</dbReference>
<dbReference type="GeneID" id="1020"/>
<dbReference type="KEGG" id="hsa:1020"/>
<dbReference type="MANE-Select" id="ENST00000485972.6">
    <property type="protein sequence ID" value="ENSP00000419782.1"/>
    <property type="RefSeq nucleotide sequence ID" value="NM_004935.4"/>
    <property type="RefSeq protein sequence ID" value="NP_004926.1"/>
</dbReference>
<dbReference type="UCSC" id="uc003wir.3">
    <molecule id="Q00535-1"/>
    <property type="organism name" value="human"/>
</dbReference>
<dbReference type="AGR" id="HGNC:1774"/>
<dbReference type="CTD" id="1020"/>
<dbReference type="DisGeNET" id="1020"/>
<dbReference type="GeneCards" id="CDK5"/>
<dbReference type="HGNC" id="HGNC:1774">
    <property type="gene designation" value="CDK5"/>
</dbReference>
<dbReference type="HPA" id="ENSG00000164885">
    <property type="expression patterns" value="Tissue enhanced (brain)"/>
</dbReference>
<dbReference type="MalaCards" id="CDK5"/>
<dbReference type="MIM" id="123831">
    <property type="type" value="gene"/>
</dbReference>
<dbReference type="MIM" id="616342">
    <property type="type" value="phenotype"/>
</dbReference>
<dbReference type="neXtProt" id="NX_Q00535"/>
<dbReference type="OpenTargets" id="ENSG00000164885"/>
<dbReference type="PharmGKB" id="PA26310"/>
<dbReference type="VEuPathDB" id="HostDB:ENSG00000164885"/>
<dbReference type="eggNOG" id="KOG0662">
    <property type="taxonomic scope" value="Eukaryota"/>
</dbReference>
<dbReference type="GeneTree" id="ENSGT00940000160805"/>
<dbReference type="HOGENOM" id="CLU_000288_181_1_1"/>
<dbReference type="InParanoid" id="Q00535"/>
<dbReference type="OMA" id="NWQIFVP"/>
<dbReference type="OrthoDB" id="1732493at2759"/>
<dbReference type="PAN-GO" id="Q00535">
    <property type="GO annotations" value="8 GO annotations based on evolutionary models"/>
</dbReference>
<dbReference type="PhylomeDB" id="Q00535"/>
<dbReference type="TreeFam" id="TF101023"/>
<dbReference type="BRENDA" id="2.7.11.1">
    <property type="organism ID" value="2681"/>
</dbReference>
<dbReference type="BRENDA" id="2.7.11.22">
    <property type="organism ID" value="2681"/>
</dbReference>
<dbReference type="PathwayCommons" id="Q00535"/>
<dbReference type="Reactome" id="R-HSA-180024">
    <property type="pathway name" value="DARPP-32 events"/>
</dbReference>
<dbReference type="Reactome" id="R-HSA-399956">
    <property type="pathway name" value="CRMPs in Sema3A signaling"/>
</dbReference>
<dbReference type="Reactome" id="R-HSA-6804756">
    <property type="pathway name" value="Regulation of TP53 Activity through Phosphorylation"/>
</dbReference>
<dbReference type="Reactome" id="R-HSA-8862803">
    <property type="pathway name" value="Deregulated CDK5 triggers multiple neurodegenerative pathways in Alzheimer's disease models"/>
</dbReference>
<dbReference type="Reactome" id="R-HSA-9031628">
    <property type="pathway name" value="NGF-stimulated transcription"/>
</dbReference>
<dbReference type="Reactome" id="R-HSA-9032845">
    <property type="pathway name" value="Activated NTRK2 signals through CDK5"/>
</dbReference>
<dbReference type="Reactome" id="R-HSA-9768919">
    <property type="pathway name" value="NPAS4 regulates expression of target genes"/>
</dbReference>
<dbReference type="Reactome" id="R-HSA-983231">
    <property type="pathway name" value="Factors involved in megakaryocyte development and platelet production"/>
</dbReference>
<dbReference type="Reactome" id="R-HSA-9841922">
    <property type="pathway name" value="MLL4 and MLL3 complexes regulate expression of PPARG target genes in adipogenesis and hepatic steatosis"/>
</dbReference>
<dbReference type="SignaLink" id="Q00535"/>
<dbReference type="SIGNOR" id="Q00535"/>
<dbReference type="BioGRID-ORCS" id="1020">
    <property type="hits" value="27 hits in 1199 CRISPR screens"/>
</dbReference>
<dbReference type="CD-CODE" id="FB4E32DD">
    <property type="entry name" value="Presynaptic clusters and postsynaptic densities"/>
</dbReference>
<dbReference type="ChiTaRS" id="CDK5">
    <property type="organism name" value="human"/>
</dbReference>
<dbReference type="EvolutionaryTrace" id="Q00535"/>
<dbReference type="GeneWiki" id="Cyclin-dependent_kinase_5"/>
<dbReference type="GenomeRNAi" id="1020"/>
<dbReference type="Pharos" id="Q00535">
    <property type="development level" value="Tchem"/>
</dbReference>
<dbReference type="PRO" id="PR:Q00535"/>
<dbReference type="Proteomes" id="UP000005640">
    <property type="component" value="Chromosome 7"/>
</dbReference>
<dbReference type="RNAct" id="Q00535">
    <property type="molecule type" value="protein"/>
</dbReference>
<dbReference type="Bgee" id="ENSG00000164885">
    <property type="expression patterns" value="Expressed in right frontal lobe and 156 other cell types or tissues"/>
</dbReference>
<dbReference type="ExpressionAtlas" id="Q00535">
    <property type="expression patterns" value="baseline and differential"/>
</dbReference>
<dbReference type="GO" id="GO:0030424">
    <property type="term" value="C:axon"/>
    <property type="evidence" value="ECO:0000250"/>
    <property type="project" value="UniProtKB"/>
</dbReference>
<dbReference type="GO" id="GO:0030054">
    <property type="term" value="C:cell junction"/>
    <property type="evidence" value="ECO:0000314"/>
    <property type="project" value="HPA"/>
</dbReference>
<dbReference type="GO" id="GO:0000307">
    <property type="term" value="C:cyclin-dependent protein kinase holoenzyme complex"/>
    <property type="evidence" value="ECO:0000353"/>
    <property type="project" value="ComplexPortal"/>
</dbReference>
<dbReference type="GO" id="GO:0005737">
    <property type="term" value="C:cytoplasm"/>
    <property type="evidence" value="ECO:0000250"/>
    <property type="project" value="UniProtKB"/>
</dbReference>
<dbReference type="GO" id="GO:0005829">
    <property type="term" value="C:cytosol"/>
    <property type="evidence" value="ECO:0000304"/>
    <property type="project" value="Reactome"/>
</dbReference>
<dbReference type="GO" id="GO:0030425">
    <property type="term" value="C:dendrite"/>
    <property type="evidence" value="ECO:0000250"/>
    <property type="project" value="UniProtKB"/>
</dbReference>
<dbReference type="GO" id="GO:0030175">
    <property type="term" value="C:filopodium"/>
    <property type="evidence" value="ECO:0007669"/>
    <property type="project" value="Ensembl"/>
</dbReference>
<dbReference type="GO" id="GO:0030426">
    <property type="term" value="C:growth cone"/>
    <property type="evidence" value="ECO:0000250"/>
    <property type="project" value="UniProtKB"/>
</dbReference>
<dbReference type="GO" id="GO:0030027">
    <property type="term" value="C:lamellipodium"/>
    <property type="evidence" value="ECO:0007669"/>
    <property type="project" value="UniProtKB-SubCell"/>
</dbReference>
<dbReference type="GO" id="GO:0016020">
    <property type="term" value="C:membrane"/>
    <property type="evidence" value="ECO:0000250"/>
    <property type="project" value="UniProtKB"/>
</dbReference>
<dbReference type="GO" id="GO:0031594">
    <property type="term" value="C:neuromuscular junction"/>
    <property type="evidence" value="ECO:0000250"/>
    <property type="project" value="UniProtKB"/>
</dbReference>
<dbReference type="GO" id="GO:0043005">
    <property type="term" value="C:neuron projection"/>
    <property type="evidence" value="ECO:0000250"/>
    <property type="project" value="ARUK-UCL"/>
</dbReference>
<dbReference type="GO" id="GO:0043025">
    <property type="term" value="C:neuronal cell body"/>
    <property type="evidence" value="ECO:0000250"/>
    <property type="project" value="UniProtKB"/>
</dbReference>
<dbReference type="GO" id="GO:0005654">
    <property type="term" value="C:nucleoplasm"/>
    <property type="evidence" value="ECO:0000314"/>
    <property type="project" value="HPA"/>
</dbReference>
<dbReference type="GO" id="GO:0005634">
    <property type="term" value="C:nucleus"/>
    <property type="evidence" value="ECO:0000250"/>
    <property type="project" value="UniProtKB"/>
</dbReference>
<dbReference type="GO" id="GO:0043204">
    <property type="term" value="C:perikaryon"/>
    <property type="evidence" value="ECO:0007669"/>
    <property type="project" value="UniProtKB-SubCell"/>
</dbReference>
<dbReference type="GO" id="GO:0005886">
    <property type="term" value="C:plasma membrane"/>
    <property type="evidence" value="ECO:0000314"/>
    <property type="project" value="HPA"/>
</dbReference>
<dbReference type="GO" id="GO:0014069">
    <property type="term" value="C:postsynaptic density"/>
    <property type="evidence" value="ECO:0000250"/>
    <property type="project" value="UniProtKB"/>
</dbReference>
<dbReference type="GO" id="GO:0098793">
    <property type="term" value="C:presynapse"/>
    <property type="evidence" value="ECO:0007669"/>
    <property type="project" value="GOC"/>
</dbReference>
<dbReference type="GO" id="GO:0016533">
    <property type="term" value="C:protein kinase 5 complex"/>
    <property type="evidence" value="ECO:0000353"/>
    <property type="project" value="ComplexPortal"/>
</dbReference>
<dbReference type="GO" id="GO:0030549">
    <property type="term" value="F:acetylcholine receptor activator activity"/>
    <property type="evidence" value="ECO:0000250"/>
    <property type="project" value="UniProtKB"/>
</dbReference>
<dbReference type="GO" id="GO:0005524">
    <property type="term" value="F:ATP binding"/>
    <property type="evidence" value="ECO:0007669"/>
    <property type="project" value="UniProtKB-KW"/>
</dbReference>
<dbReference type="GO" id="GO:0004693">
    <property type="term" value="F:cyclin-dependent protein serine/threonine kinase activity"/>
    <property type="evidence" value="ECO:0000318"/>
    <property type="project" value="GO_Central"/>
</dbReference>
<dbReference type="GO" id="GO:0005176">
    <property type="term" value="F:ErbB-2 class receptor binding"/>
    <property type="evidence" value="ECO:0000250"/>
    <property type="project" value="UniProtKB"/>
</dbReference>
<dbReference type="GO" id="GO:0043125">
    <property type="term" value="F:ErbB-3 class receptor binding"/>
    <property type="evidence" value="ECO:0000250"/>
    <property type="project" value="UniProtKB"/>
</dbReference>
<dbReference type="GO" id="GO:0051879">
    <property type="term" value="F:Hsp90 protein binding"/>
    <property type="evidence" value="ECO:0007669"/>
    <property type="project" value="Ensembl"/>
</dbReference>
<dbReference type="GO" id="GO:0016301">
    <property type="term" value="F:kinase activity"/>
    <property type="evidence" value="ECO:0000250"/>
    <property type="project" value="UniProtKB"/>
</dbReference>
<dbReference type="GO" id="GO:0002039">
    <property type="term" value="F:p53 binding"/>
    <property type="evidence" value="ECO:0007669"/>
    <property type="project" value="Ensembl"/>
</dbReference>
<dbReference type="GO" id="GO:0004672">
    <property type="term" value="F:protein kinase activity"/>
    <property type="evidence" value="ECO:0000304"/>
    <property type="project" value="ProtInc"/>
</dbReference>
<dbReference type="GO" id="GO:0106310">
    <property type="term" value="F:protein serine kinase activity"/>
    <property type="evidence" value="ECO:0007669"/>
    <property type="project" value="RHEA"/>
</dbReference>
<dbReference type="GO" id="GO:0004674">
    <property type="term" value="F:protein serine/threonine kinase activity"/>
    <property type="evidence" value="ECO:0000314"/>
    <property type="project" value="UniProtKB"/>
</dbReference>
<dbReference type="GO" id="GO:0048156">
    <property type="term" value="F:tau protein binding"/>
    <property type="evidence" value="ECO:0000303"/>
    <property type="project" value="ARUK-UCL"/>
</dbReference>
<dbReference type="GO" id="GO:0050321">
    <property type="term" value="F:tau-protein kinase activity"/>
    <property type="evidence" value="ECO:0000250"/>
    <property type="project" value="UniProtKB"/>
</dbReference>
<dbReference type="GO" id="GO:0030036">
    <property type="term" value="P:actin cytoskeleton organization"/>
    <property type="evidence" value="ECO:0000304"/>
    <property type="project" value="UniProtKB"/>
</dbReference>
<dbReference type="GO" id="GO:0048675">
    <property type="term" value="P:axon extension"/>
    <property type="evidence" value="ECO:0000304"/>
    <property type="project" value="UniProtKB"/>
</dbReference>
<dbReference type="GO" id="GO:0007409">
    <property type="term" value="P:axonogenesis"/>
    <property type="evidence" value="ECO:0000318"/>
    <property type="project" value="GO_Central"/>
</dbReference>
<dbReference type="GO" id="GO:0048148">
    <property type="term" value="P:behavioral response to cocaine"/>
    <property type="evidence" value="ECO:0007669"/>
    <property type="project" value="Ensembl"/>
</dbReference>
<dbReference type="GO" id="GO:0070509">
    <property type="term" value="P:calcium ion import"/>
    <property type="evidence" value="ECO:0007669"/>
    <property type="project" value="Ensembl"/>
</dbReference>
<dbReference type="GO" id="GO:0051301">
    <property type="term" value="P:cell division"/>
    <property type="evidence" value="ECO:0007669"/>
    <property type="project" value="UniProtKB-KW"/>
</dbReference>
<dbReference type="GO" id="GO:0007160">
    <property type="term" value="P:cell-matrix adhesion"/>
    <property type="evidence" value="ECO:0007669"/>
    <property type="project" value="Ensembl"/>
</dbReference>
<dbReference type="GO" id="GO:1904646">
    <property type="term" value="P:cellular response to amyloid-beta"/>
    <property type="evidence" value="ECO:0000250"/>
    <property type="project" value="ARUK-UCL"/>
</dbReference>
<dbReference type="GO" id="GO:0021954">
    <property type="term" value="P:central nervous system neuron development"/>
    <property type="evidence" value="ECO:0007669"/>
    <property type="project" value="Ensembl"/>
</dbReference>
<dbReference type="GO" id="GO:0021697">
    <property type="term" value="P:cerebellar cortex formation"/>
    <property type="evidence" value="ECO:0007669"/>
    <property type="project" value="Ensembl"/>
</dbReference>
<dbReference type="GO" id="GO:0007268">
    <property type="term" value="P:chemical synaptic transmission"/>
    <property type="evidence" value="ECO:0000304"/>
    <property type="project" value="UniProtKB"/>
</dbReference>
<dbReference type="GO" id="GO:0022038">
    <property type="term" value="P:corpus callosum development"/>
    <property type="evidence" value="ECO:0007669"/>
    <property type="project" value="Ensembl"/>
</dbReference>
<dbReference type="GO" id="GO:0048813">
    <property type="term" value="P:dendrite morphogenesis"/>
    <property type="evidence" value="ECO:0007669"/>
    <property type="project" value="Ensembl"/>
</dbReference>
<dbReference type="GO" id="GO:0060079">
    <property type="term" value="P:excitatory postsynaptic potential"/>
    <property type="evidence" value="ECO:0007669"/>
    <property type="project" value="Ensembl"/>
</dbReference>
<dbReference type="GO" id="GO:0021766">
    <property type="term" value="P:hippocampus development"/>
    <property type="evidence" value="ECO:0007669"/>
    <property type="project" value="Ensembl"/>
</dbReference>
<dbReference type="GO" id="GO:0006886">
    <property type="term" value="P:intracellular protein transport"/>
    <property type="evidence" value="ECO:0007669"/>
    <property type="project" value="Ensembl"/>
</dbReference>
<dbReference type="GO" id="GO:0021819">
    <property type="term" value="P:layer formation in cerebral cortex"/>
    <property type="evidence" value="ECO:0007669"/>
    <property type="project" value="Ensembl"/>
</dbReference>
<dbReference type="GO" id="GO:0000226">
    <property type="term" value="P:microtubule cytoskeleton organization"/>
    <property type="evidence" value="ECO:0000304"/>
    <property type="project" value="ARUK-UCL"/>
</dbReference>
<dbReference type="GO" id="GO:0008045">
    <property type="term" value="P:motor neuron axon guidance"/>
    <property type="evidence" value="ECO:0007669"/>
    <property type="project" value="Ensembl"/>
</dbReference>
<dbReference type="GO" id="GO:0030517">
    <property type="term" value="P:negative regulation of axon extension"/>
    <property type="evidence" value="ECO:0007669"/>
    <property type="project" value="Ensembl"/>
</dbReference>
<dbReference type="GO" id="GO:1903234">
    <property type="term" value="P:negative regulation of calcium ion-dependent exocytosis of neurotransmitter"/>
    <property type="evidence" value="ECO:0000250"/>
    <property type="project" value="ARUK-UCL"/>
</dbReference>
<dbReference type="GO" id="GO:0045786">
    <property type="term" value="P:negative regulation of cell cycle"/>
    <property type="evidence" value="ECO:0007669"/>
    <property type="project" value="Ensembl"/>
</dbReference>
<dbReference type="GO" id="GO:0045892">
    <property type="term" value="P:negative regulation of DNA-templated transcription"/>
    <property type="evidence" value="ECO:0000315"/>
    <property type="project" value="DFLAT"/>
</dbReference>
<dbReference type="GO" id="GO:0046826">
    <property type="term" value="P:negative regulation of protein export from nucleus"/>
    <property type="evidence" value="ECO:0007669"/>
    <property type="project" value="Ensembl"/>
</dbReference>
<dbReference type="GO" id="GO:0031397">
    <property type="term" value="P:negative regulation of protein ubiquitination"/>
    <property type="evidence" value="ECO:0007669"/>
    <property type="project" value="Ensembl"/>
</dbReference>
<dbReference type="GO" id="GO:0045861">
    <property type="term" value="P:negative regulation of proteolysis"/>
    <property type="evidence" value="ECO:0000315"/>
    <property type="project" value="ParkinsonsUK-UCL"/>
</dbReference>
<dbReference type="GO" id="GO:0031914">
    <property type="term" value="P:negative regulation of synaptic plasticity"/>
    <property type="evidence" value="ECO:0007669"/>
    <property type="project" value="Ensembl"/>
</dbReference>
<dbReference type="GO" id="GO:0051402">
    <property type="term" value="P:neuron apoptotic process"/>
    <property type="evidence" value="ECO:0000318"/>
    <property type="project" value="GO_Central"/>
</dbReference>
<dbReference type="GO" id="GO:0030182">
    <property type="term" value="P:neuron differentiation"/>
    <property type="evidence" value="ECO:0000250"/>
    <property type="project" value="UniProtKB"/>
</dbReference>
<dbReference type="GO" id="GO:0001764">
    <property type="term" value="P:neuron migration"/>
    <property type="evidence" value="ECO:0000304"/>
    <property type="project" value="UniProtKB"/>
</dbReference>
<dbReference type="GO" id="GO:0031175">
    <property type="term" value="P:neuron projection development"/>
    <property type="evidence" value="ECO:0000250"/>
    <property type="project" value="UniProtKB"/>
</dbReference>
<dbReference type="GO" id="GO:0048709">
    <property type="term" value="P:oligodendrocyte differentiation"/>
    <property type="evidence" value="ECO:0000314"/>
    <property type="project" value="UniProtKB"/>
</dbReference>
<dbReference type="GO" id="GO:0045956">
    <property type="term" value="P:positive regulation of calcium ion-dependent exocytosis"/>
    <property type="evidence" value="ECO:0007669"/>
    <property type="project" value="Ensembl"/>
</dbReference>
<dbReference type="GO" id="GO:0043525">
    <property type="term" value="P:positive regulation of neuron apoptotic process"/>
    <property type="evidence" value="ECO:0000250"/>
    <property type="project" value="UniProtKB"/>
</dbReference>
<dbReference type="GO" id="GO:0099533">
    <property type="term" value="P:positive regulation of presynaptic cytosolic calcium concentration"/>
    <property type="evidence" value="ECO:0000250"/>
    <property type="project" value="ARUK-UCL"/>
</dbReference>
<dbReference type="GO" id="GO:0090314">
    <property type="term" value="P:positive regulation of protein targeting to membrane"/>
    <property type="evidence" value="ECO:0007669"/>
    <property type="project" value="Ensembl"/>
</dbReference>
<dbReference type="GO" id="GO:0035418">
    <property type="term" value="P:protein localization to synapse"/>
    <property type="evidence" value="ECO:0007669"/>
    <property type="project" value="Ensembl"/>
</dbReference>
<dbReference type="GO" id="GO:0032801">
    <property type="term" value="P:receptor catabolic process"/>
    <property type="evidence" value="ECO:0007669"/>
    <property type="project" value="Ensembl"/>
</dbReference>
<dbReference type="GO" id="GO:0043113">
    <property type="term" value="P:receptor clustering"/>
    <property type="evidence" value="ECO:0007669"/>
    <property type="project" value="Ensembl"/>
</dbReference>
<dbReference type="GO" id="GO:0042981">
    <property type="term" value="P:regulation of apoptotic process"/>
    <property type="evidence" value="ECO:0000304"/>
    <property type="project" value="UniProtKB"/>
</dbReference>
<dbReference type="GO" id="GO:0051726">
    <property type="term" value="P:regulation of cell cycle"/>
    <property type="evidence" value="ECO:0000304"/>
    <property type="project" value="UniProtKB"/>
</dbReference>
<dbReference type="GO" id="GO:1901987">
    <property type="term" value="P:regulation of cell cycle phase transition"/>
    <property type="evidence" value="ECO:0000318"/>
    <property type="project" value="GO_Central"/>
</dbReference>
<dbReference type="GO" id="GO:0030334">
    <property type="term" value="P:regulation of cell migration"/>
    <property type="evidence" value="ECO:0007669"/>
    <property type="project" value="Ensembl"/>
</dbReference>
<dbReference type="GO" id="GO:0061001">
    <property type="term" value="P:regulation of dendritic spine morphogenesis"/>
    <property type="evidence" value="ECO:0000250"/>
    <property type="project" value="UniProtKB"/>
</dbReference>
<dbReference type="GO" id="GO:0016241">
    <property type="term" value="P:regulation of macroautophagy"/>
    <property type="evidence" value="ECO:0000304"/>
    <property type="project" value="ParkinsonsUK-UCL"/>
</dbReference>
<dbReference type="GO" id="GO:1903076">
    <property type="term" value="P:regulation of protein localization to plasma membrane"/>
    <property type="evidence" value="ECO:0000250"/>
    <property type="project" value="ARUK-UCL"/>
</dbReference>
<dbReference type="GO" id="GO:0048167">
    <property type="term" value="P:regulation of synaptic plasticity"/>
    <property type="evidence" value="ECO:0000250"/>
    <property type="project" value="UniProtKB"/>
</dbReference>
<dbReference type="GO" id="GO:0051966">
    <property type="term" value="P:regulation of synaptic transmission, glutamatergic"/>
    <property type="evidence" value="ECO:0000250"/>
    <property type="project" value="ARUK-UCL"/>
</dbReference>
<dbReference type="GO" id="GO:1903421">
    <property type="term" value="P:regulation of synaptic vesicle recycling"/>
    <property type="evidence" value="ECO:0000303"/>
    <property type="project" value="ParkinsonsUK-UCL"/>
</dbReference>
<dbReference type="GO" id="GO:0048511">
    <property type="term" value="P:rhythmic process"/>
    <property type="evidence" value="ECO:0007669"/>
    <property type="project" value="UniProtKB-KW"/>
</dbReference>
<dbReference type="GO" id="GO:0014044">
    <property type="term" value="P:Schwann cell development"/>
    <property type="evidence" value="ECO:0007669"/>
    <property type="project" value="Ensembl"/>
</dbReference>
<dbReference type="GO" id="GO:0019233">
    <property type="term" value="P:sensory perception of pain"/>
    <property type="evidence" value="ECO:0007669"/>
    <property type="project" value="Ensembl"/>
</dbReference>
<dbReference type="GO" id="GO:0007519">
    <property type="term" value="P:skeletal muscle tissue development"/>
    <property type="evidence" value="ECO:0007669"/>
    <property type="project" value="Ensembl"/>
</dbReference>
<dbReference type="GO" id="GO:0007416">
    <property type="term" value="P:synapse assembly"/>
    <property type="evidence" value="ECO:0000304"/>
    <property type="project" value="UniProtKB"/>
</dbReference>
<dbReference type="GO" id="GO:0001963">
    <property type="term" value="P:synaptic transmission, dopaminergic"/>
    <property type="evidence" value="ECO:0007669"/>
    <property type="project" value="Ensembl"/>
</dbReference>
<dbReference type="GO" id="GO:0035249">
    <property type="term" value="P:synaptic transmission, glutamatergic"/>
    <property type="evidence" value="ECO:0007669"/>
    <property type="project" value="Ensembl"/>
</dbReference>
<dbReference type="GO" id="GO:0048488">
    <property type="term" value="P:synaptic vesicle endocytosis"/>
    <property type="evidence" value="ECO:0000304"/>
    <property type="project" value="UniProtKB"/>
</dbReference>
<dbReference type="GO" id="GO:0016079">
    <property type="term" value="P:synaptic vesicle exocytosis"/>
    <property type="evidence" value="ECO:0000304"/>
    <property type="project" value="UniProtKB"/>
</dbReference>
<dbReference type="GO" id="GO:0048489">
    <property type="term" value="P:synaptic vesicle transport"/>
    <property type="evidence" value="ECO:0000318"/>
    <property type="project" value="GO_Central"/>
</dbReference>
<dbReference type="GO" id="GO:0008542">
    <property type="term" value="P:visual learning"/>
    <property type="evidence" value="ECO:0007669"/>
    <property type="project" value="Ensembl"/>
</dbReference>
<dbReference type="CDD" id="cd07839">
    <property type="entry name" value="STKc_CDK5"/>
    <property type="match status" value="1"/>
</dbReference>
<dbReference type="FunFam" id="3.30.200.20:FF:000144">
    <property type="entry name" value="Cyclin-dependent kinase 5"/>
    <property type="match status" value="1"/>
</dbReference>
<dbReference type="FunFam" id="1.10.510.10:FF:000184">
    <property type="entry name" value="cyclin-dependent kinase 5 homolog"/>
    <property type="match status" value="1"/>
</dbReference>
<dbReference type="Gene3D" id="3.30.200.20">
    <property type="entry name" value="Phosphorylase Kinase, domain 1"/>
    <property type="match status" value="1"/>
</dbReference>
<dbReference type="Gene3D" id="1.10.510.10">
    <property type="entry name" value="Transferase(Phosphotransferase) domain 1"/>
    <property type="match status" value="1"/>
</dbReference>
<dbReference type="InterPro" id="IPR050108">
    <property type="entry name" value="CDK"/>
</dbReference>
<dbReference type="InterPro" id="IPR011009">
    <property type="entry name" value="Kinase-like_dom_sf"/>
</dbReference>
<dbReference type="InterPro" id="IPR000719">
    <property type="entry name" value="Prot_kinase_dom"/>
</dbReference>
<dbReference type="InterPro" id="IPR017441">
    <property type="entry name" value="Protein_kinase_ATP_BS"/>
</dbReference>
<dbReference type="InterPro" id="IPR008271">
    <property type="entry name" value="Ser/Thr_kinase_AS"/>
</dbReference>
<dbReference type="PANTHER" id="PTHR24056">
    <property type="entry name" value="CELL DIVISION PROTEIN KINASE"/>
    <property type="match status" value="1"/>
</dbReference>
<dbReference type="PANTHER" id="PTHR24056:SF46">
    <property type="entry name" value="CYCLIN-DEPENDENT KINASE 5"/>
    <property type="match status" value="1"/>
</dbReference>
<dbReference type="Pfam" id="PF00069">
    <property type="entry name" value="Pkinase"/>
    <property type="match status" value="1"/>
</dbReference>
<dbReference type="SMART" id="SM00220">
    <property type="entry name" value="S_TKc"/>
    <property type="match status" value="1"/>
</dbReference>
<dbReference type="SUPFAM" id="SSF56112">
    <property type="entry name" value="Protein kinase-like (PK-like)"/>
    <property type="match status" value="1"/>
</dbReference>
<dbReference type="PROSITE" id="PS00107">
    <property type="entry name" value="PROTEIN_KINASE_ATP"/>
    <property type="match status" value="1"/>
</dbReference>
<dbReference type="PROSITE" id="PS50011">
    <property type="entry name" value="PROTEIN_KINASE_DOM"/>
    <property type="match status" value="1"/>
</dbReference>
<dbReference type="PROSITE" id="PS00108">
    <property type="entry name" value="PROTEIN_KINASE_ST"/>
    <property type="match status" value="1"/>
</dbReference>
<keyword id="KW-0002">3D-structure</keyword>
<keyword id="KW-0007">Acetylation</keyword>
<keyword id="KW-0025">Alternative splicing</keyword>
<keyword id="KW-0053">Apoptosis</keyword>
<keyword id="KW-0067">ATP-binding</keyword>
<keyword id="KW-0090">Biological rhythms</keyword>
<keyword id="KW-0131">Cell cycle</keyword>
<keyword id="KW-0132">Cell division</keyword>
<keyword id="KW-1003">Cell membrane</keyword>
<keyword id="KW-0966">Cell projection</keyword>
<keyword id="KW-0963">Cytoplasm</keyword>
<keyword id="KW-0418">Kinase</keyword>
<keyword id="KW-0451">Lissencephaly</keyword>
<keyword id="KW-0472">Membrane</keyword>
<keyword id="KW-0523">Neurodegeneration</keyword>
<keyword id="KW-0524">Neurogenesis</keyword>
<keyword id="KW-0547">Nucleotide-binding</keyword>
<keyword id="KW-0539">Nucleus</keyword>
<keyword id="KW-0597">Phosphoprotein</keyword>
<keyword id="KW-1267">Proteomics identification</keyword>
<keyword id="KW-1185">Reference proteome</keyword>
<keyword id="KW-0723">Serine/threonine-protein kinase</keyword>
<keyword id="KW-0770">Synapse</keyword>
<keyword id="KW-0808">Transferase</keyword>
<sequence length="292" mass="33304">MQKYEKLEKIGEGTYGTVFKAKNRETHEIVALKRVRLDDDDEGVPSSALREICLLKELKHKNIVRLHDVLHSDKKLTLVFEFCDQDLKKYFDSCNGDLDPEIVKSFLFQLLKGLGFCHSRNVLHRDLKPQNLLINRNGELKLADFGLARAFGIPVRCYSAEVVTLWYRPPDVLFGAKLYSTSIDMWSAGCIFAELANAGRPLFPGNDVDDQLKRIFRLLGTPTEEQWPSMTKLPDYKPYPMYPATTSLVNVVPKLNATGRDLLQNLLKCNPVQRISAEEALQHPYFSDFCPP</sequence>
<organism>
    <name type="scientific">Homo sapiens</name>
    <name type="common">Human</name>
    <dbReference type="NCBI Taxonomy" id="9606"/>
    <lineage>
        <taxon>Eukaryota</taxon>
        <taxon>Metazoa</taxon>
        <taxon>Chordata</taxon>
        <taxon>Craniata</taxon>
        <taxon>Vertebrata</taxon>
        <taxon>Euteleostomi</taxon>
        <taxon>Mammalia</taxon>
        <taxon>Eutheria</taxon>
        <taxon>Euarchontoglires</taxon>
        <taxon>Primates</taxon>
        <taxon>Haplorrhini</taxon>
        <taxon>Catarrhini</taxon>
        <taxon>Hominidae</taxon>
        <taxon>Homo</taxon>
    </lineage>
</organism>